<comment type="function">
    <text evidence="14 21 22 24 26 27 29 34 35 40 41 42">Transcription corepressor known to repress transcriptional potential of several sumoylated transcription factors. Down-regulates basal and activated transcription. Its transcription repressor activity is modulated by recruiting it to subnuclear compartments like the nucleolus or PML/POD/ND10 nuclear bodies through interactions with MCSR1 and PML, respectively. Seems to regulate transcription in PML/POD/ND10 nuclear bodies together with PML and may influence TNFRSF6-dependent apoptosis thereby. Inhibits transcriptional activation of PAX3 and ETS1 through direct protein-protein interactions. Modulates PAX5 activity; the function seems to involve CREBBP. Acts as an adapter protein in a MDM2-DAXX-USP7 complex by regulating the RING-finger E3 ligase MDM2 ubiquitination activity. Under non-stress condition, in association with the deubiquitinating USP7, prevents MDM2 self-ubiquitination and enhances the intrinsic E3 ligase activity of MDM2 towards TP53, thereby promoting TP53 ubiquitination and subsequent proteasomal degradation. Upon DNA damage, its association with MDM2 and USP7 is disrupted, resulting in increased MDM2 autoubiquitination and consequently, MDM2 degradation, which leads to TP53 stabilization. Acts as a histone chaperone that facilitates deposition of histone H3.3. Acts as a targeting component of the chromatin remodeling complex ATRX:DAXX which has ATP-dependent DNA translocase activity and catalyzes the replication-independent deposition of histone H3.3 in pericentric DNA repeats outside S-phase and telomeres, and the in vitro remodeling of H3.3-containing nucleosomes. Does not affect the ATPase activity of ATRX but alleviates its transcription repression activity. Upon neuronal activation associates with regulatory elements of selected immediate early genes where it promotes deposition of histone H3.3 which may be linked to transcriptional induction of these genes. Required for the recruitment of histone H3.3:H4 dimers to PML-nuclear bodies (PML-NBs); the process is independent of ATRX and facilitated by ASF1A; PML-NBs are suggested to function as regulatory sites for the incorporation of newly synthesized histone H3.3 into chromatin. In case of overexpression of centromeric histone variant CENPA (as found in various tumors) is involved in its mislocalization to chromosomes; the ectopic localization involves a heterotypic tetramer containing CENPA, and histones H3.3 and H4 and decreases binding of CTCF to chromatin. Proposed to mediate activation of the JNK pathway and apoptosis via MAP3K5 in response to signaling from TNFRSF6 and TGFBR2. Interaction with HSPB1/HSP27 may prevent interaction with TNFRSF6 and MAP3K5 and block DAXX-mediated apoptosis. In contrast, in lymphoid cells JNC activation and TNFRSF6-mediated apoptosis may not involve DAXX. Shows restriction activity towards human cytomegalovirus (HCMV). Plays a role as a positive regulator of the heat shock transcription factor HSF1 activity during the stress protein response (PubMed:15016915).</text>
</comment>
<comment type="subunit">
    <text evidence="5 6 7 8 9 10 11 13 14 16 17 18 20 21 22 23 24 25 26 28 30 33 34 35 36 38 39 44 46">Homomultimer. Interacts (via C-terminus) with TNFRSF6 (via death domain). Interacts with PAX5, SLC2A4/GLUT4, MAP3K5, TGFBR2, phosphorylated dimeric HSPB1/HSP27, CENPC, ETS1, sumoylated PML, UBE2I, MCRS1 and TP53. Interacts (via N-terminus) with HIPK2 and HIPK3. Interacts with HIPK1, which induces translocation from PML/POD/ND10 nuclear bodies to chromatin and enhances association with HDAC1. Interacts (non-phosphorylated) with PAX3, PAX7, DEK, HDAC1, HDAC2, HDAC3, acetylated histone H4 and histones H2A, H2B, H3, H3.3 and H4. Interacts with SPOP; mediating CUL3-dependent proteasomal degradation. Interacts with CBP; the interaction is dependent the sumoylation of CBP and suppresses CBP transcriptional activity via recruitment of HDAC2 directly in the complex with TP53 and HIPK2. Interacts with AXIN1; the interaction stimulates the interaction of DAXX with TP53, stimulates 'Ser-46' phosphorylation of TP53 on and induces cell death on UV irradiation. Interacts with MDM2; the interaction is direct. Interacts with USP7; the interaction is direct and independent of MDM2 and TP53. Part of a complex with DAXX, MDM2 and USP7 under non-stress conditions. Interacts (via N-terminus) with RASSF1 (via C-terminus); the interaction is independent of MDM2 and TP53; RASSF1 isoform A disrupts interactions among MDM2, DAXX and USP7, thus contributing to the efficient activation of TP53 by promoting MDM2 self-ubiquitination in cell-cycle checkpoint control in response to DNA damage. Interacts with ATRX to form the chromatin remodeling complex ATRX:DAXX. Interacts with HSF1 (via homotrimeric form preferentially); this interaction relieves homotrimeric HSF1 from repression of its transcriptional activity by HSP90-dependent multichaperone complex upon heat shock (PubMed:15016915). Interacts with SUMO1P1/SUMO5 (PubMed:27211601).</text>
</comment>
<comment type="subunit">
    <text evidence="31">(Microbial infection) Interacts with human cytomegalovirus/HHV-5 tegument phosphoprotein pp71 and protein UL123.</text>
</comment>
<comment type="subunit">
    <text evidence="43">(Microbial infection) Interacts with Epstein-Barr virus protein BNRF1.</text>
</comment>
<comment type="subunit">
    <text evidence="19">(Microbial infection) Interacts with human adenovirus 5 E1B-55K protein; this interaction might alterate the normal interactions of DAXX, PML, and TP53, which may contribute to cell transformation.</text>
</comment>
<comment type="subunit">
    <text evidence="12">(Microbial infection) Interacts with Puumala hantavirus nucleoprotein.</text>
</comment>
<comment type="interaction">
    <interactant intactId="EBI-77321">
        <id>Q9UER7</id>
    </interactant>
    <interactant intactId="EBI-1753081">
        <id>O43918</id>
        <label>AIRE</label>
    </interactant>
    <organismsDiffer>false</organismsDiffer>
    <experiments>5</experiments>
</comment>
<comment type="interaction">
    <interactant intactId="EBI-77321">
        <id>Q9UER7</id>
    </interactant>
    <interactant intactId="EBI-746752">
        <id>Q9Y2J4</id>
        <label>AMOTL2</label>
    </interactant>
    <organismsDiffer>false</organismsDiffer>
    <experiments>3</experiments>
</comment>
<comment type="interaction">
    <interactant intactId="EBI-77321">
        <id>Q9UER7</id>
    </interactant>
    <interactant intactId="EBI-21535880">
        <id>Q92870-2</id>
        <label>APBB2</label>
    </interactant>
    <organismsDiffer>false</organismsDiffer>
    <experiments>3</experiments>
</comment>
<comment type="interaction">
    <interactant intactId="EBI-77321">
        <id>Q9UER7</id>
    </interactant>
    <interactant intactId="EBI-608057">
        <id>P10275</id>
        <label>AR</label>
    </interactant>
    <organismsDiffer>false</organismsDiffer>
    <experiments>5</experiments>
</comment>
<comment type="interaction">
    <interactant intactId="EBI-77321">
        <id>Q9UER7</id>
    </interactant>
    <interactant intactId="EBI-396461">
        <id>P46100</id>
        <label>ATRX</label>
    </interactant>
    <organismsDiffer>false</organismsDiffer>
    <experiments>11</experiments>
</comment>
<comment type="interaction">
    <interactant intactId="EBI-77321">
        <id>Q9UER7</id>
    </interactant>
    <interactant intactId="EBI-751319">
        <id>Q9H257</id>
        <label>CARD9</label>
    </interactant>
    <organismsDiffer>false</organismsDiffer>
    <experiments>3</experiments>
</comment>
<comment type="interaction">
    <interactant intactId="EBI-77321">
        <id>Q9UER7</id>
    </interactant>
    <interactant intactId="EBI-5278764">
        <id>Q96GN5</id>
        <label>CDCA7L</label>
    </interactant>
    <organismsDiffer>false</organismsDiffer>
    <experiments>3</experiments>
</comment>
<comment type="interaction">
    <interactant intactId="EBI-77321">
        <id>Q9UER7</id>
    </interactant>
    <interactant intactId="EBI-625922">
        <id>Q8N726</id>
        <label>CDKN2A</label>
    </interactant>
    <organismsDiffer>false</organismsDiffer>
    <experiments>8</experiments>
</comment>
<comment type="interaction">
    <interactant intactId="EBI-77321">
        <id>Q9UER7</id>
    </interactant>
    <interactant intactId="EBI-11522539">
        <id>Q96MT8-3</id>
        <label>CEP63</label>
    </interactant>
    <organismsDiffer>false</organismsDiffer>
    <experiments>3</experiments>
</comment>
<comment type="interaction">
    <interactant intactId="EBI-77321">
        <id>Q9UER7</id>
    </interactant>
    <interactant intactId="EBI-739624">
        <id>Q8NHQ1</id>
        <label>CEP70</label>
    </interactant>
    <organismsDiffer>false</organismsDiffer>
    <experiments>3</experiments>
</comment>
<comment type="interaction">
    <interactant intactId="EBI-77321">
        <id>Q9UER7</id>
    </interactant>
    <interactant intactId="EBI-81215">
        <id>Q92793</id>
        <label>CREBBP</label>
    </interactant>
    <organismsDiffer>false</organismsDiffer>
    <experiments>2</experiments>
</comment>
<comment type="interaction">
    <interactant intactId="EBI-77321">
        <id>Q9UER7</id>
    </interactant>
    <interactant intactId="EBI-399105">
        <id>Q9NPF5</id>
        <label>DMAP1</label>
    </interactant>
    <organismsDiffer>false</organismsDiffer>
    <experiments>3</experiments>
</comment>
<comment type="interaction">
    <interactant intactId="EBI-77321">
        <id>Q9UER7</id>
    </interactant>
    <interactant intactId="EBI-10976677">
        <id>G5E9A7</id>
        <label>DMWD</label>
    </interactant>
    <organismsDiffer>false</organismsDiffer>
    <experiments>3</experiments>
</comment>
<comment type="interaction">
    <interactant intactId="EBI-77321">
        <id>Q9UER7</id>
    </interactant>
    <interactant intactId="EBI-10175124">
        <id>Q8IZU0</id>
        <label>FAM9B</label>
    </interactant>
    <organismsDiffer>false</organismsDiffer>
    <experiments>4</experiments>
</comment>
<comment type="interaction">
    <interactant intactId="EBI-77321">
        <id>Q9UER7</id>
    </interactant>
    <interactant intactId="EBI-494743">
        <id>P25445</id>
        <label>FAS</label>
    </interactant>
    <organismsDiffer>false</organismsDiffer>
    <experiments>3</experiments>
</comment>
<comment type="interaction">
    <interactant intactId="EBI-77321">
        <id>Q9UER7</id>
    </interactant>
    <interactant intactId="EBI-713259">
        <id>P02794</id>
        <label>FTH1</label>
    </interactant>
    <organismsDiffer>false</organismsDiffer>
    <experiments>5</experiments>
</comment>
<comment type="interaction">
    <interactant intactId="EBI-77321">
        <id>Q9UER7</id>
    </interactant>
    <interactant intactId="EBI-1052570">
        <id>O95995</id>
        <label>GAS8</label>
    </interactant>
    <organismsDiffer>false</organismsDiffer>
    <experiments>5</experiments>
</comment>
<comment type="interaction">
    <interactant intactId="EBI-77321">
        <id>Q9UER7</id>
    </interactant>
    <interactant intactId="EBI-1955541">
        <id>Q53GS7</id>
        <label>GLE1</label>
    </interactant>
    <organismsDiffer>false</organismsDiffer>
    <experiments>3</experiments>
</comment>
<comment type="interaction">
    <interactant intactId="EBI-77321">
        <id>Q9UER7</id>
    </interactant>
    <interactant intactId="EBI-2548508">
        <id>Q96IK5</id>
        <label>GMCL1</label>
    </interactant>
    <organismsDiffer>false</organismsDiffer>
    <experiments>3</experiments>
</comment>
<comment type="interaction">
    <interactant intactId="EBI-77321">
        <id>Q9UER7</id>
    </interactant>
    <interactant intactId="EBI-618309">
        <id>Q08379</id>
        <label>GOLGA2</label>
    </interactant>
    <organismsDiffer>false</organismsDiffer>
    <experiments>8</experiments>
</comment>
<comment type="interaction">
    <interactant intactId="EBI-77321">
        <id>Q9UER7</id>
    </interactant>
    <interactant intactId="EBI-5916454">
        <id>A6NEM1</id>
        <label>GOLGA6L9</label>
    </interactant>
    <organismsDiffer>false</organismsDiffer>
    <experiments>3</experiments>
</comment>
<comment type="interaction">
    <interactant intactId="EBI-77321">
        <id>Q9UER7</id>
    </interactant>
    <interactant intactId="EBI-717919">
        <id>Q4V328</id>
        <label>GRIPAP1</label>
    </interactant>
    <organismsDiffer>false</organismsDiffer>
    <experiments>3</experiments>
</comment>
<comment type="interaction">
    <interactant intactId="EBI-77321">
        <id>Q9UER7</id>
    </interactant>
    <interactant intactId="EBI-120658">
        <id>P84243</id>
        <label>H3-3B</label>
    </interactant>
    <organismsDiffer>false</organismsDiffer>
    <experiments>8</experiments>
</comment>
<comment type="interaction">
    <interactant intactId="EBI-77321">
        <id>Q9UER7</id>
    </interactant>
    <interactant intactId="EBI-2868501">
        <id>Q6NXT2</id>
        <label>H3-5</label>
    </interactant>
    <organismsDiffer>false</organismsDiffer>
    <experiments>3</experiments>
</comment>
<comment type="interaction">
    <interactant intactId="EBI-77321">
        <id>Q9UER7</id>
    </interactant>
    <interactant intactId="EBI-301834">
        <id>Q13547</id>
        <label>HDAC1</label>
    </interactant>
    <organismsDiffer>false</organismsDiffer>
    <experiments>2</experiments>
</comment>
<comment type="interaction">
    <interactant intactId="EBI-77321">
        <id>Q9UER7</id>
    </interactant>
    <interactant intactId="EBI-301821">
        <id>Q92769</id>
        <label>HDAC2</label>
    </interactant>
    <organismsDiffer>false</organismsDiffer>
    <experiments>2</experiments>
</comment>
<comment type="interaction">
    <interactant intactId="EBI-77321">
        <id>Q9UER7</id>
    </interactant>
    <interactant intactId="EBI-352682">
        <id>P04792</id>
        <label>HSPB1</label>
    </interactant>
    <organismsDiffer>false</organismsDiffer>
    <experiments>4</experiments>
</comment>
<comment type="interaction">
    <interactant intactId="EBI-77321">
        <id>Q9UER7</id>
    </interactant>
    <interactant intactId="EBI-466029">
        <id>P42858</id>
        <label>HTT</label>
    </interactant>
    <organismsDiffer>false</organismsDiffer>
    <experiments>15</experiments>
</comment>
<comment type="interaction">
    <interactant intactId="EBI-77321">
        <id>Q9UER7</id>
    </interactant>
    <interactant intactId="EBI-741463">
        <id>Q8WVF5</id>
        <label>KCTD4</label>
    </interactant>
    <organismsDiffer>false</organismsDiffer>
    <experiments>3</experiments>
</comment>
<comment type="interaction">
    <interactant intactId="EBI-77321">
        <id>Q9UER7</id>
    </interactant>
    <interactant intactId="EBI-11959635">
        <id>Q9P2G9-2</id>
        <label>KLHL8</label>
    </interactant>
    <organismsDiffer>false</organismsDiffer>
    <experiments>3</experiments>
</comment>
<comment type="interaction">
    <interactant intactId="EBI-77321">
        <id>Q9UER7</id>
    </interactant>
    <interactant intactId="EBI-476263">
        <id>Q99683</id>
        <label>MAP3K5</label>
    </interactant>
    <organismsDiffer>false</organismsDiffer>
    <experiments>7</experiments>
</comment>
<comment type="interaction">
    <interactant intactId="EBI-77321">
        <id>Q9UER7</id>
    </interactant>
    <interactant intactId="EBI-348259">
        <id>Q96EZ8</id>
        <label>MCRS1</label>
    </interactant>
    <organismsDiffer>false</organismsDiffer>
    <experiments>11</experiments>
</comment>
<comment type="interaction">
    <interactant intactId="EBI-77321">
        <id>Q9UER7</id>
    </interactant>
    <interactant intactId="EBI-389668">
        <id>Q00987</id>
        <label>MDM2</label>
    </interactant>
    <organismsDiffer>false</organismsDiffer>
    <experiments>18</experiments>
</comment>
<comment type="interaction">
    <interactant intactId="EBI-77321">
        <id>Q9UER7</id>
    </interactant>
    <interactant intactId="EBI-2548751">
        <id>Q8TD10</id>
        <label>MIPOL1</label>
    </interactant>
    <organismsDiffer>false</organismsDiffer>
    <experiments>3</experiments>
</comment>
<comment type="interaction">
    <interactant intactId="EBI-77321">
        <id>Q9UER7</id>
    </interactant>
    <interactant intactId="EBI-373524">
        <id>Q9UHC7</id>
        <label>MKRN1</label>
    </interactant>
    <organismsDiffer>false</organismsDiffer>
    <experiments>3</experiments>
</comment>
<comment type="interaction">
    <interactant intactId="EBI-77321">
        <id>Q9UER7</id>
    </interactant>
    <interactant intactId="EBI-7850168">
        <id>Q8NCY6</id>
        <label>MSANTD4</label>
    </interactant>
    <organismsDiffer>false</organismsDiffer>
    <experiments>3</experiments>
</comment>
<comment type="interaction">
    <interactant intactId="EBI-77321">
        <id>Q9UER7</id>
    </interactant>
    <interactant intactId="EBI-10172876">
        <id>Q7Z6G3-2</id>
        <label>NECAB2</label>
    </interactant>
    <organismsDiffer>false</organismsDiffer>
    <experiments>6</experiments>
</comment>
<comment type="interaction">
    <interactant intactId="EBI-77321">
        <id>Q9UER7</id>
    </interactant>
    <interactant intactId="EBI-3390132">
        <id>Q9BZ95</id>
        <label>NSD3</label>
    </interactant>
    <organismsDiffer>false</organismsDiffer>
    <experiments>2</experiments>
</comment>
<comment type="interaction">
    <interactant intactId="EBI-77321">
        <id>Q9UER7</id>
    </interactant>
    <interactant intactId="EBI-1164361">
        <id>Q99497</id>
        <label>PARK7</label>
    </interactant>
    <organismsDiffer>false</organismsDiffer>
    <experiments>6</experiments>
</comment>
<comment type="interaction">
    <interactant intactId="EBI-77321">
        <id>Q9UER7</id>
    </interactant>
    <interactant intactId="EBI-740845">
        <id>Q96AQ6</id>
        <label>PBXIP1</label>
    </interactant>
    <organismsDiffer>false</organismsDiffer>
    <experiments>3</experiments>
</comment>
<comment type="interaction">
    <interactant intactId="EBI-77321">
        <id>Q9UER7</id>
    </interactant>
    <interactant intactId="EBI-752057">
        <id>Q7Z412</id>
        <label>PEX26</label>
    </interactant>
    <organismsDiffer>false</organismsDiffer>
    <experiments>3</experiments>
</comment>
<comment type="interaction">
    <interactant intactId="EBI-77321">
        <id>Q9UER7</id>
    </interactant>
    <interactant intactId="EBI-14066006">
        <id>Q4G0R1</id>
        <label>PIBF1</label>
    </interactant>
    <organismsDiffer>false</organismsDiffer>
    <experiments>3</experiments>
</comment>
<comment type="interaction">
    <interactant intactId="EBI-77321">
        <id>Q9UER7</id>
    </interactant>
    <interactant intactId="EBI-295890">
        <id>P29590</id>
        <label>PML</label>
    </interactant>
    <organismsDiffer>false</organismsDiffer>
    <experiments>6</experiments>
</comment>
<comment type="interaction">
    <interactant intactId="EBI-77321">
        <id>Q9UER7</id>
    </interactant>
    <interactant intactId="EBI-50433196">
        <id>A0A6Q8PF08</id>
        <label>PMP22</label>
    </interactant>
    <organismsDiffer>false</organismsDiffer>
    <experiments>3</experiments>
</comment>
<comment type="interaction">
    <interactant intactId="EBI-77321">
        <id>Q9UER7</id>
    </interactant>
    <interactant intactId="EBI-302345">
        <id>Q8ND90</id>
        <label>PNMA1</label>
    </interactant>
    <organismsDiffer>false</organismsDiffer>
    <experiments>5</experiments>
</comment>
<comment type="interaction">
    <interactant intactId="EBI-77321">
        <id>Q9UER7</id>
    </interactant>
    <interactant intactId="EBI-367363">
        <id>Q9NS23</id>
        <label>RASSF1</label>
    </interactant>
    <organismsDiffer>false</organismsDiffer>
    <experiments>6</experiments>
</comment>
<comment type="interaction">
    <interactant intactId="EBI-77321">
        <id>Q9UER7</id>
    </interactant>
    <interactant intactId="EBI-438710">
        <id>Q9NS23-4</id>
        <label>RASSF1</label>
    </interactant>
    <organismsDiffer>false</organismsDiffer>
    <experiments>5</experiments>
</comment>
<comment type="interaction">
    <interactant intactId="EBI-77321">
        <id>Q9UER7</id>
    </interactant>
    <interactant intactId="EBI-2845202">
        <id>Q86WH2</id>
        <label>RASSF3</label>
    </interactant>
    <organismsDiffer>false</organismsDiffer>
    <experiments>3</experiments>
</comment>
<comment type="interaction">
    <interactant intactId="EBI-77321">
        <id>Q9UER7</id>
    </interactant>
    <interactant intactId="EBI-73886">
        <id>Q04206</id>
        <label>RELA</label>
    </interactant>
    <organismsDiffer>false</organismsDiffer>
    <experiments>5</experiments>
</comment>
<comment type="interaction">
    <interactant intactId="EBI-77321">
        <id>Q9UER7</id>
    </interactant>
    <interactant intactId="EBI-2340927">
        <id>P78317</id>
        <label>RNF4</label>
    </interactant>
    <organismsDiffer>false</organismsDiffer>
    <experiments>3</experiments>
</comment>
<comment type="interaction">
    <interactant intactId="EBI-77321">
        <id>Q9UER7</id>
    </interactant>
    <interactant intactId="EBI-358028">
        <id>O76021</id>
        <label>RSL1D1</label>
    </interactant>
    <organismsDiffer>false</organismsDiffer>
    <experiments>2</experiments>
</comment>
<comment type="interaction">
    <interactant intactId="EBI-77321">
        <id>Q9UER7</id>
    </interactant>
    <interactant intactId="EBI-748621">
        <id>Q9UJW9</id>
        <label>SERTAD3</label>
    </interactant>
    <organismsDiffer>false</organismsDiffer>
    <experiments>3</experiments>
</comment>
<comment type="interaction">
    <interactant intactId="EBI-77321">
        <id>Q9UER7</id>
    </interactant>
    <interactant intactId="EBI-743549">
        <id>O43791</id>
        <label>SPOP</label>
    </interactant>
    <organismsDiffer>false</organismsDiffer>
    <experiments>5</experiments>
</comment>
<comment type="interaction">
    <interactant intactId="EBI-77321">
        <id>Q9UER7</id>
    </interactant>
    <interactant intactId="EBI-5235340">
        <id>Q7Z699</id>
        <label>SPRED1</label>
    </interactant>
    <organismsDiffer>false</organismsDiffer>
    <experiments>3</experiments>
</comment>
<comment type="interaction">
    <interactant intactId="EBI-77321">
        <id>Q9UER7</id>
    </interactant>
    <interactant intactId="EBI-2212028">
        <id>Q9Y2D8</id>
        <label>SSX2IP</label>
    </interactant>
    <organismsDiffer>false</organismsDiffer>
    <experiments>3</experiments>
</comment>
<comment type="interaction">
    <interactant intactId="EBI-77321">
        <id>Q9UER7</id>
    </interactant>
    <interactant intactId="EBI-518675">
        <id>P40763</id>
        <label>STAT3</label>
    </interactant>
    <organismsDiffer>false</organismsDiffer>
    <experiments>4</experiments>
</comment>
<comment type="interaction">
    <interactant intactId="EBI-77321">
        <id>Q9UER7</id>
    </interactant>
    <interactant intactId="EBI-80140">
        <id>P63165</id>
        <label>SUMO1</label>
    </interactant>
    <organismsDiffer>false</organismsDiffer>
    <experiments>7</experiments>
</comment>
<comment type="interaction">
    <interactant intactId="EBI-77321">
        <id>Q9UER7</id>
    </interactant>
    <interactant intactId="EBI-529518">
        <id>Q86VP1</id>
        <label>TAX1BP1</label>
    </interactant>
    <organismsDiffer>false</organismsDiffer>
    <experiments>3</experiments>
</comment>
<comment type="interaction">
    <interactant intactId="EBI-77321">
        <id>Q9UER7</id>
    </interactant>
    <interactant intactId="EBI-924724">
        <id>Q9NQB0</id>
        <label>TCF7L2</label>
    </interactant>
    <organismsDiffer>false</organismsDiffer>
    <experiments>5</experiments>
</comment>
<comment type="interaction">
    <interactant intactId="EBI-77321">
        <id>Q9UER7</id>
    </interactant>
    <interactant intactId="EBI-1105213">
        <id>Q9UBB9</id>
        <label>TFIP11</label>
    </interactant>
    <organismsDiffer>false</organismsDiffer>
    <experiments>3</experiments>
</comment>
<comment type="interaction">
    <interactant intactId="EBI-77321">
        <id>Q9UER7</id>
    </interactant>
    <interactant intactId="EBI-296151">
        <id>P37173</id>
        <label>TGFBR2</label>
    </interactant>
    <organismsDiffer>false</organismsDiffer>
    <experiments>2</experiments>
</comment>
<comment type="interaction">
    <interactant intactId="EBI-77321">
        <id>Q9UER7</id>
    </interactant>
    <interactant intactId="EBI-366083">
        <id>P04637</id>
        <label>TP53</label>
    </interactant>
    <organismsDiffer>false</organismsDiffer>
    <experiments>12</experiments>
</comment>
<comment type="interaction">
    <interactant intactId="EBI-77321">
        <id>Q9UER7</id>
    </interactant>
    <interactant intactId="EBI-346882">
        <id>Q99816</id>
        <label>TSG101</label>
    </interactant>
    <organismsDiffer>false</organismsDiffer>
    <experiments>4</experiments>
</comment>
<comment type="interaction">
    <interactant intactId="EBI-77321">
        <id>Q9UER7</id>
    </interactant>
    <interactant intactId="EBI-3390054">
        <id>P0CG48</id>
        <label>UBC</label>
    </interactant>
    <organismsDiffer>false</organismsDiffer>
    <experiments>2</experiments>
</comment>
<comment type="interaction">
    <interactant intactId="EBI-77321">
        <id>Q9UER7</id>
    </interactant>
    <interactant intactId="EBI-80168">
        <id>P63279</id>
        <label>UBE2I</label>
    </interactant>
    <organismsDiffer>false</organismsDiffer>
    <experiments>3</experiments>
</comment>
<comment type="interaction">
    <interactant intactId="EBI-77321">
        <id>Q9UER7</id>
    </interactant>
    <interactant intactId="EBI-8601749">
        <id>Q495M9</id>
        <label>USH1G</label>
    </interactant>
    <organismsDiffer>false</organismsDiffer>
    <experiments>3</experiments>
</comment>
<comment type="interaction">
    <interactant intactId="EBI-77321">
        <id>Q9UER7</id>
    </interactant>
    <interactant intactId="EBI-302474">
        <id>Q93009</id>
        <label>USP7</label>
    </interactant>
    <organismsDiffer>false</organismsDiffer>
    <experiments>16</experiments>
</comment>
<comment type="interaction">
    <interactant intactId="EBI-77321">
        <id>Q9UER7</id>
    </interactant>
    <interactant intactId="EBI-2515601">
        <id>Q8N680</id>
        <label>ZBTB2</label>
    </interactant>
    <organismsDiffer>false</organismsDiffer>
    <experiments>3</experiments>
</comment>
<comment type="interaction">
    <interactant intactId="EBI-77321">
        <id>Q9UER7</id>
    </interactant>
    <interactant intactId="EBI-3918996">
        <id>Q9HCK0</id>
        <label>ZBTB26</label>
    </interactant>
    <organismsDiffer>false</organismsDiffer>
    <experiments>3</experiments>
</comment>
<comment type="interaction">
    <interactant intactId="EBI-77321">
        <id>Q9UER7</id>
    </interactant>
    <interactant intactId="EBI-3943507">
        <id>Q9P243</id>
        <label>ZFAT</label>
    </interactant>
    <organismsDiffer>false</organismsDiffer>
    <experiments>5</experiments>
</comment>
<comment type="interaction">
    <interactant intactId="EBI-77321">
        <id>Q9UER7</id>
    </interactant>
    <interactant intactId="EBI-9349301">
        <id>P03179</id>
        <label>BNRF1</label>
    </interactant>
    <organismsDiffer>true</organismsDiffer>
    <experiments>5</experiments>
</comment>
<comment type="interaction">
    <interactant intactId="EBI-77321">
        <id>Q9UER7</id>
    </interactant>
    <interactant intactId="EBI-1561155">
        <id>P03244</id>
        <label>E1B</label>
    </interactant>
    <organismsDiffer>true</organismsDiffer>
    <experiments>4</experiments>
</comment>
<comment type="interaction">
    <interactant intactId="EBI-77321">
        <id>Q9UER7</id>
    </interactant>
    <interactant intactId="EBI-296206">
        <id>P25446</id>
        <label>Fas</label>
    </interactant>
    <organismsDiffer>true</organismsDiffer>
    <experiments>4</experiments>
</comment>
<comment type="interaction">
    <interactant intactId="EBI-77321">
        <id>Q9UER7</id>
    </interactant>
    <interactant intactId="EBI-692945">
        <id>O88904</id>
        <label>Hipk1</label>
    </interactant>
    <organismsDiffer>true</organismsDiffer>
    <experiments>3</experiments>
</comment>
<comment type="interaction">
    <interactant intactId="EBI-77321">
        <id>Q9UER7</id>
    </interactant>
    <interactant intactId="EBI-1559114">
        <id>P15991</id>
        <label>HSPB1</label>
    </interactant>
    <organismsDiffer>true</organismsDiffer>
    <experiments>3</experiments>
</comment>
<comment type="interaction">
    <interactant intactId="EBI-77321">
        <id>Q9UER7</id>
    </interactant>
    <interactant intactId="EBI-296260">
        <id>Q02650</id>
        <label>Pax5</label>
    </interactant>
    <organismsDiffer>true</organismsDiffer>
    <experiments>4</experiments>
</comment>
<comment type="interaction">
    <interactant intactId="EBI-77321">
        <id>Q9UER7</id>
    </interactant>
    <interactant intactId="EBI-2367423">
        <id>Q9QZL0</id>
        <label>Ripk3</label>
    </interactant>
    <organismsDiffer>true</organismsDiffer>
    <experiments>2</experiments>
</comment>
<comment type="interaction">
    <interactant intactId="EBI-77321">
        <id>Q9UER7</id>
    </interactant>
    <interactant intactId="EBI-1561361">
        <id>P03243</id>
    </interactant>
    <organismsDiffer>true</organismsDiffer>
    <experiments>4</experiments>
</comment>
<comment type="interaction">
    <interactant intactId="EBI-287635">
        <id>Q9UER7-1</id>
    </interactant>
    <interactant intactId="EBI-913224">
        <id>P14921-1</id>
        <label>ETS1</label>
    </interactant>
    <organismsDiffer>false</organismsDiffer>
    <experiments>3</experiments>
</comment>
<comment type="interaction">
    <interactant intactId="EBI-287635">
        <id>Q9UER7-1</id>
    </interactant>
    <interactant intactId="EBI-913228">
        <id>P14921-2</id>
        <label>ETS1</label>
    </interactant>
    <organismsDiffer>false</organismsDiffer>
    <experiments>2</experiments>
</comment>
<comment type="interaction">
    <interactant intactId="EBI-287635">
        <id>Q9UER7-1</id>
    </interactant>
    <interactant intactId="EBI-120658">
        <id>P84243</id>
        <label>H3-3B</label>
    </interactant>
    <organismsDiffer>false</organismsDiffer>
    <experiments>21</experiments>
</comment>
<comment type="interaction">
    <interactant intactId="EBI-287635">
        <id>Q9UER7-1</id>
    </interactant>
    <interactant intactId="EBI-79722">
        <id>P68431</id>
        <label>H3C12</label>
    </interactant>
    <organismsDiffer>false</organismsDiffer>
    <experiments>6</experiments>
</comment>
<comment type="interaction">
    <interactant intactId="EBI-287635">
        <id>Q9UER7-1</id>
    </interactant>
    <interactant intactId="EBI-750650">
        <id>Q71DI3</id>
        <label>H3C15</label>
    </interactant>
    <organismsDiffer>false</organismsDiffer>
    <experiments>5</experiments>
</comment>
<comment type="subcellular location">
    <subcellularLocation>
        <location evidence="10 11 18 45">Cytoplasm</location>
    </subcellularLocation>
    <subcellularLocation>
        <location evidence="6 26 30 40 45">Nucleus</location>
        <location evidence="6 26 30 40 45">Nucleoplasm</location>
    </subcellularLocation>
    <subcellularLocation>
        <location evidence="6 11 21 27 37 40 41 43">Nucleus</location>
        <location evidence="6 11 21 27 37 40 41 43">PML body</location>
    </subcellularLocation>
    <subcellularLocation>
        <location evidence="40">Nucleus</location>
        <location evidence="40">Nucleolus</location>
    </subcellularLocation>
    <subcellularLocation>
        <location evidence="41 46">Chromosome</location>
        <location evidence="41 46">Centromere</location>
    </subcellularLocation>
    <text evidence="11 17 18 21 26 30 40 41 46 51">Dispersed throughout the nucleoplasm, in PML/POD/ND10 nuclear bodies, and in nucleoli (Probable). Colocalizes with histone H3.3, ATRX, HIRA and ASF1A at PML-nuclear bodies (PubMed:12953102, PubMed:14990586, PubMed:23222847, PubMed:24200965). Colocalizes with a subset of interphase centromeres, but is absent from mitotic centromeres (PubMed:9645950). Detected in cytoplasmic punctate structures (PubMed:11842083). Translocates from the nucleus to the cytoplasm upon glucose deprivation or oxidative stress (PubMed:12968034). Colocalizes with RASSF1 in the nucleus (PubMed:18566590). Colocalizes with USP7 in nucleoplasma with accumulation in speckled structures (PubMed:16845383).</text>
</comment>
<comment type="subcellular location">
    <molecule>Isoform beta</molecule>
    <subcellularLocation>
        <location evidence="37">Nucleus</location>
    </subcellularLocation>
    <text evidence="37">Diffuse nuclear distribution pattern and no comparable dot-like accumulation of isoform 1.</text>
</comment>
<comment type="subcellular location">
    <molecule>Isoform gamma</molecule>
    <subcellularLocation>
        <location evidence="37">Nucleus</location>
    </subcellularLocation>
    <text evidence="37">Diffuse nuclear distribution pattern and no comparable dot-like accumulation of isoform 1.</text>
</comment>
<comment type="alternative products">
    <event type="alternative splicing"/>
    <isoform>
        <id>Q9UER7-1</id>
        <name>1</name>
        <sequence type="displayed"/>
    </isoform>
    <isoform>
        <id>Q9UER7-2</id>
        <name>2</name>
        <sequence type="described" ref="VSP_001270"/>
    </isoform>
    <isoform>
        <id>Q9UER7-3</id>
        <name>3</name>
        <sequence type="described" ref="VSP_045588"/>
    </isoform>
    <isoform>
        <id>Q9UER7-4</id>
        <name>beta</name>
        <sequence type="described" ref="VSP_057438 VSP_057440"/>
    </isoform>
    <isoform>
        <id>Q9UER7-5</id>
        <name>gamma</name>
        <sequence type="described" ref="VSP_057437 VSP_057439"/>
    </isoform>
</comment>
<comment type="tissue specificity">
    <text>Ubiquitous.</text>
</comment>
<comment type="induction">
    <text>Upon mitogenic stimulation by concanavalin-A.</text>
</comment>
<comment type="domain">
    <text>The Sumo interaction motif mediates Sumo binding, and is required both for sumoylation and binding to sumoylated targets.</text>
</comment>
<comment type="PTM">
    <text evidence="11 15 27">Sumoylated with SUMO1 on multiple lysine residues.</text>
</comment>
<comment type="PTM">
    <text evidence="5 14 18">Phosphorylated by HIPK1 upon glucose deprivation.</text>
</comment>
<comment type="PTM">
    <text evidence="25 32">Polyubiquitinated; which is promoted by CUL3 and SPOP and results in proteasomal degradation. Ubiquitinated by MDM2; inducing its degradation. Deubiquitinated by USP7; leading to stabilize it.</text>
</comment>
<comment type="miscellaneous">
    <molecule>Isoform beta</molecule>
    <text evidence="50">Markedly decreased affinity for PML and TP53/p53, unable to repress p53-mediated transcription.</text>
</comment>
<comment type="miscellaneous">
    <molecule>Isoform gamma</molecule>
    <text evidence="50">Markedly decreased affinity for PML and TP53/p53, unable to repress p53-mediated transcription.</text>
</comment>
<comment type="similarity">
    <text evidence="50">Belongs to the DAXX family.</text>
</comment>
<comment type="online information" name="Atlas of Genetics and Cytogenetics in Oncology and Haematology">
    <link uri="https://atlasgeneticsoncology.org/gene/40265/DAXX"/>
</comment>
<protein>
    <recommendedName>
        <fullName>Death domain-associated protein 6</fullName>
    </recommendedName>
    <alternativeName>
        <fullName>Daxx</fullName>
        <shortName>hDaxx</shortName>
    </alternativeName>
    <alternativeName>
        <fullName>ETS1-associated protein 1</fullName>
        <shortName>EAP1</shortName>
    </alternativeName>
    <alternativeName>
        <fullName>Fas death domain-associated protein</fullName>
    </alternativeName>
</protein>
<proteinExistence type="evidence at protein level"/>
<accession>Q9UER7</accession>
<accession>B4E1I3</accession>
<accession>F5ANJ6</accession>
<accession>F5ANJ7</accession>
<accession>F5H082</accession>
<accession>O14747</accession>
<accession>O15141</accession>
<accession>O15208</accession>
<accession>Q5STK9</accession>
<accession>Q9BWI3</accession>
<gene>
    <name type="primary">DAXX</name>
    <name type="synonym">BING2</name>
    <name type="synonym">DAP6</name>
</gene>
<evidence type="ECO:0000250" key="1">
    <source>
        <dbReference type="UniProtKB" id="O35613"/>
    </source>
</evidence>
<evidence type="ECO:0000250" key="2">
    <source>
        <dbReference type="UniProtKB" id="Q8VIB2"/>
    </source>
</evidence>
<evidence type="ECO:0000255" key="3"/>
<evidence type="ECO:0000256" key="4">
    <source>
        <dbReference type="SAM" id="MobiDB-lite"/>
    </source>
</evidence>
<evidence type="ECO:0000269" key="5">
    <source>
    </source>
</evidence>
<evidence type="ECO:0000269" key="6">
    <source>
    </source>
</evidence>
<evidence type="ECO:0000269" key="7">
    <source>
    </source>
</evidence>
<evidence type="ECO:0000269" key="8">
    <source>
    </source>
</evidence>
<evidence type="ECO:0000269" key="9">
    <source>
    </source>
</evidence>
<evidence type="ECO:0000269" key="10">
    <source>
    </source>
</evidence>
<evidence type="ECO:0000269" key="11">
    <source>
    </source>
</evidence>
<evidence type="ECO:0000269" key="12">
    <source>
    </source>
</evidence>
<evidence type="ECO:0000269" key="13">
    <source>
    </source>
</evidence>
<evidence type="ECO:0000269" key="14">
    <source>
    </source>
</evidence>
<evidence type="ECO:0000269" key="15">
    <source>
    </source>
</evidence>
<evidence type="ECO:0000269" key="16">
    <source>
    </source>
</evidence>
<evidence type="ECO:0000269" key="17">
    <source>
    </source>
</evidence>
<evidence type="ECO:0000269" key="18">
    <source>
    </source>
</evidence>
<evidence type="ECO:0000269" key="19">
    <source>
    </source>
</evidence>
<evidence type="ECO:0000269" key="20">
    <source>
    </source>
</evidence>
<evidence type="ECO:0000269" key="21">
    <source>
    </source>
</evidence>
<evidence type="ECO:0000269" key="22">
    <source>
    </source>
</evidence>
<evidence type="ECO:0000269" key="23">
    <source>
    </source>
</evidence>
<evidence type="ECO:0000269" key="24">
    <source>
    </source>
</evidence>
<evidence type="ECO:0000269" key="25">
    <source>
    </source>
</evidence>
<evidence type="ECO:0000269" key="26">
    <source>
    </source>
</evidence>
<evidence type="ECO:0000269" key="27">
    <source>
    </source>
</evidence>
<evidence type="ECO:0000269" key="28">
    <source>
    </source>
</evidence>
<evidence type="ECO:0000269" key="29">
    <source>
    </source>
</evidence>
<evidence type="ECO:0000269" key="30">
    <source>
    </source>
</evidence>
<evidence type="ECO:0000269" key="31">
    <source>
    </source>
</evidence>
<evidence type="ECO:0000269" key="32">
    <source>
    </source>
</evidence>
<evidence type="ECO:0000269" key="33">
    <source>
    </source>
</evidence>
<evidence type="ECO:0000269" key="34">
    <source>
    </source>
</evidence>
<evidence type="ECO:0000269" key="35">
    <source>
    </source>
</evidence>
<evidence type="ECO:0000269" key="36">
    <source>
    </source>
</evidence>
<evidence type="ECO:0000269" key="37">
    <source>
    </source>
</evidence>
<evidence type="ECO:0000269" key="38">
    <source>
    </source>
</evidence>
<evidence type="ECO:0000269" key="39">
    <source>
    </source>
</evidence>
<evidence type="ECO:0000269" key="40">
    <source>
    </source>
</evidence>
<evidence type="ECO:0000269" key="41">
    <source>
    </source>
</evidence>
<evidence type="ECO:0000269" key="42">
    <source>
    </source>
</evidence>
<evidence type="ECO:0000269" key="43">
    <source>
    </source>
</evidence>
<evidence type="ECO:0000269" key="44">
    <source>
    </source>
</evidence>
<evidence type="ECO:0000269" key="45">
    <source>
    </source>
</evidence>
<evidence type="ECO:0000269" key="46">
    <source>
    </source>
</evidence>
<evidence type="ECO:0000303" key="47">
    <source>
    </source>
</evidence>
<evidence type="ECO:0000303" key="48">
    <source>
    </source>
</evidence>
<evidence type="ECO:0000303" key="49">
    <source>
    </source>
</evidence>
<evidence type="ECO:0000305" key="50"/>
<evidence type="ECO:0000305" key="51">
    <source>
    </source>
</evidence>
<evidence type="ECO:0007744" key="52">
    <source>
    </source>
</evidence>
<evidence type="ECO:0007744" key="53">
    <source>
    </source>
</evidence>
<evidence type="ECO:0007744" key="54">
    <source>
    </source>
</evidence>
<evidence type="ECO:0007744" key="55">
    <source>
    </source>
</evidence>
<evidence type="ECO:0007744" key="56">
    <source>
    </source>
</evidence>
<evidence type="ECO:0007744" key="57">
    <source>
    </source>
</evidence>
<evidence type="ECO:0007744" key="58">
    <source>
    </source>
</evidence>
<evidence type="ECO:0007744" key="59">
    <source>
    </source>
</evidence>
<evidence type="ECO:0007744" key="60">
    <source>
    </source>
</evidence>
<evidence type="ECO:0007744" key="61">
    <source>
    </source>
</evidence>
<evidence type="ECO:0007829" key="62">
    <source>
        <dbReference type="PDB" id="2KZS"/>
    </source>
</evidence>
<evidence type="ECO:0007829" key="63">
    <source>
        <dbReference type="PDB" id="2KZU"/>
    </source>
</evidence>
<evidence type="ECO:0007829" key="64">
    <source>
        <dbReference type="PDB" id="4H9N"/>
    </source>
</evidence>
<evidence type="ECO:0007829" key="65">
    <source>
        <dbReference type="PDB" id="4H9S"/>
    </source>
</evidence>
<evidence type="ECO:0007829" key="66">
    <source>
        <dbReference type="PDB" id="5GRQ"/>
    </source>
</evidence>
<keyword id="KW-0002">3D-structure</keyword>
<keyword id="KW-0007">Acetylation</keyword>
<keyword id="KW-0025">Alternative splicing</keyword>
<keyword id="KW-0053">Apoptosis</keyword>
<keyword id="KW-0137">Centromere</keyword>
<keyword id="KW-0143">Chaperone</keyword>
<keyword id="KW-0156">Chromatin regulator</keyword>
<keyword id="KW-0158">Chromosome</keyword>
<keyword id="KW-0175">Coiled coil</keyword>
<keyword id="KW-0963">Cytoplasm</keyword>
<keyword id="KW-0945">Host-virus interaction</keyword>
<keyword id="KW-1017">Isopeptide bond</keyword>
<keyword id="KW-0539">Nucleus</keyword>
<keyword id="KW-0597">Phosphoprotein</keyword>
<keyword id="KW-1267">Proteomics identification</keyword>
<keyword id="KW-1185">Reference proteome</keyword>
<keyword id="KW-0678">Repressor</keyword>
<keyword id="KW-0804">Transcription</keyword>
<keyword id="KW-0805">Transcription regulation</keyword>
<keyword id="KW-0832">Ubl conjugation</keyword>
<organism>
    <name type="scientific">Homo sapiens</name>
    <name type="common">Human</name>
    <dbReference type="NCBI Taxonomy" id="9606"/>
    <lineage>
        <taxon>Eukaryota</taxon>
        <taxon>Metazoa</taxon>
        <taxon>Chordata</taxon>
        <taxon>Craniata</taxon>
        <taxon>Vertebrata</taxon>
        <taxon>Euteleostomi</taxon>
        <taxon>Mammalia</taxon>
        <taxon>Eutheria</taxon>
        <taxon>Euarchontoglires</taxon>
        <taxon>Primates</taxon>
        <taxon>Haplorrhini</taxon>
        <taxon>Catarrhini</taxon>
        <taxon>Hominidae</taxon>
        <taxon>Homo</taxon>
    </lineage>
</organism>
<reference key="1">
    <citation type="journal article" date="1997" name="Cell">
        <title>Daxx, a novel Fas-binding protein that activates JNK and apoptosis.</title>
        <authorList>
            <person name="Yang X."/>
            <person name="Khosravi-Far R."/>
            <person name="Chang H.Y."/>
            <person name="Baltimore D."/>
        </authorList>
    </citation>
    <scope>NUCLEOTIDE SEQUENCE [MRNA] (ISOFORM 1)</scope>
</reference>
<reference key="2">
    <citation type="journal article" date="1997" name="DNA Cell Biol.">
        <title>Cloning and expression of primate Daxx cDNAs and mapping of the human gene to chromosome 6p21.3 in the MHC region.</title>
        <authorList>
            <person name="Kiriakidou M."/>
            <person name="Driscoll D.A."/>
            <person name="Lopez-Guisa J.M."/>
            <person name="Strauss J.F. III"/>
        </authorList>
    </citation>
    <scope>NUCLEOTIDE SEQUENCE [MRNA] (ISOFORM 1)</scope>
    <scope>SUBCELLULAR LOCATION</scope>
    <source>
        <tissue>Placenta</tissue>
    </source>
</reference>
<reference key="3">
    <citation type="journal article" date="1998" name="J. Cell Sci.">
        <title>Interphase-specific association of intrinsic centromere protein CENP-C with HDaxx, a death domain-binding protein implicated in Fas-mediated cell death.</title>
        <authorList>
            <person name="Pluta A.F."/>
            <person name="Earnshaw W.C."/>
            <person name="Goldberg I.G."/>
        </authorList>
    </citation>
    <scope>NUCLEOTIDE SEQUENCE [MRNA] (ISOFORM 1)</scope>
    <scope>INTERACTION WITH CENPC</scope>
    <scope>SUBCELLULAR LOCATION</scope>
    <source>
        <tissue>Cervix carcinoma</tissue>
    </source>
</reference>
<reference key="4">
    <citation type="journal article" date="1998" name="J. Mol. Biol.">
        <title>TAPASIN, DAXX, RGL2, HKE2 and four new genes (BING 1, 3 to 5) form a dense cluster at the centromeric end of the MHC.</title>
        <authorList>
            <person name="Herberg J.A."/>
            <person name="Beck S."/>
            <person name="Trowsdale J."/>
        </authorList>
    </citation>
    <scope>NUCLEOTIDE SEQUENCE [GENOMIC DNA] (ISOFORM 1)</scope>
</reference>
<reference key="5">
    <citation type="journal article" date="2000" name="Oncogene">
        <title>EAP1/Daxx interacts with ETS1 and represses transcriptional activation of ETS1 target genes.</title>
        <authorList>
            <person name="Li R."/>
            <person name="Pei H."/>
            <person name="Watson D.K."/>
            <person name="Papas T.S."/>
        </authorList>
    </citation>
    <scope>NUCLEOTIDE SEQUENCE [MRNA] (ISOFORM 1)</scope>
    <source>
        <tissue>T-cell</tissue>
    </source>
</reference>
<reference key="6">
    <citation type="journal article" date="2011" name="J. Biol. Chem.">
        <title>Daxx-beta and Daxx-gamma, two novel splice variants of the transcriptional co-repressor Daxx.</title>
        <authorList>
            <person name="Wethkamp N."/>
            <person name="Hanenberg H."/>
            <person name="Funke S."/>
            <person name="Suschek C.V."/>
            <person name="Wetzel W."/>
            <person name="Heikaus S."/>
            <person name="Grinstein E."/>
            <person name="Ramp U."/>
            <person name="Engers R."/>
            <person name="Gabbert H.E."/>
            <person name="Mahotka C."/>
        </authorList>
    </citation>
    <scope>NUCLEOTIDE SEQUENCE [MRNA] (ISOFORMS BETA AND GAMMA)</scope>
    <scope>SUBCELLULAR LOCATION (ISOFORMS BETA AND GAMMA)</scope>
    <scope>ALTERNATIVE SPLICING</scope>
    <source>
        <tissue>Renal cell carcinoma</tissue>
    </source>
</reference>
<reference key="7">
    <citation type="submission" date="1998-05" db="EMBL/GenBank/DDBJ databases">
        <authorList>
            <person name="Usui T."/>
        </authorList>
    </citation>
    <scope>NUCLEOTIDE SEQUENCE [MRNA] (ISOFORM 1)</scope>
</reference>
<reference key="8">
    <citation type="journal article" date="2004" name="Nat. Genet.">
        <title>Complete sequencing and characterization of 21,243 full-length human cDNAs.</title>
        <authorList>
            <person name="Ota T."/>
            <person name="Suzuki Y."/>
            <person name="Nishikawa T."/>
            <person name="Otsuki T."/>
            <person name="Sugiyama T."/>
            <person name="Irie R."/>
            <person name="Wakamatsu A."/>
            <person name="Hayashi K."/>
            <person name="Sato H."/>
            <person name="Nagai K."/>
            <person name="Kimura K."/>
            <person name="Makita H."/>
            <person name="Sekine M."/>
            <person name="Obayashi M."/>
            <person name="Nishi T."/>
            <person name="Shibahara T."/>
            <person name="Tanaka T."/>
            <person name="Ishii S."/>
            <person name="Yamamoto J."/>
            <person name="Saito K."/>
            <person name="Kawai Y."/>
            <person name="Isono Y."/>
            <person name="Nakamura Y."/>
            <person name="Nagahari K."/>
            <person name="Murakami K."/>
            <person name="Yasuda T."/>
            <person name="Iwayanagi T."/>
            <person name="Wagatsuma M."/>
            <person name="Shiratori A."/>
            <person name="Sudo H."/>
            <person name="Hosoiri T."/>
            <person name="Kaku Y."/>
            <person name="Kodaira H."/>
            <person name="Kondo H."/>
            <person name="Sugawara M."/>
            <person name="Takahashi M."/>
            <person name="Kanda K."/>
            <person name="Yokoi T."/>
            <person name="Furuya T."/>
            <person name="Kikkawa E."/>
            <person name="Omura Y."/>
            <person name="Abe K."/>
            <person name="Kamihara K."/>
            <person name="Katsuta N."/>
            <person name="Sato K."/>
            <person name="Tanikawa M."/>
            <person name="Yamazaki M."/>
            <person name="Ninomiya K."/>
            <person name="Ishibashi T."/>
            <person name="Yamashita H."/>
            <person name="Murakawa K."/>
            <person name="Fujimori K."/>
            <person name="Tanai H."/>
            <person name="Kimata M."/>
            <person name="Watanabe M."/>
            <person name="Hiraoka S."/>
            <person name="Chiba Y."/>
            <person name="Ishida S."/>
            <person name="Ono Y."/>
            <person name="Takiguchi S."/>
            <person name="Watanabe S."/>
            <person name="Yosida M."/>
            <person name="Hotuta T."/>
            <person name="Kusano J."/>
            <person name="Kanehori K."/>
            <person name="Takahashi-Fujii A."/>
            <person name="Hara H."/>
            <person name="Tanase T.-O."/>
            <person name="Nomura Y."/>
            <person name="Togiya S."/>
            <person name="Komai F."/>
            <person name="Hara R."/>
            <person name="Takeuchi K."/>
            <person name="Arita M."/>
            <person name="Imose N."/>
            <person name="Musashino K."/>
            <person name="Yuuki H."/>
            <person name="Oshima A."/>
            <person name="Sasaki N."/>
            <person name="Aotsuka S."/>
            <person name="Yoshikawa Y."/>
            <person name="Matsunawa H."/>
            <person name="Ichihara T."/>
            <person name="Shiohata N."/>
            <person name="Sano S."/>
            <person name="Moriya S."/>
            <person name="Momiyama H."/>
            <person name="Satoh N."/>
            <person name="Takami S."/>
            <person name="Terashima Y."/>
            <person name="Suzuki O."/>
            <person name="Nakagawa S."/>
            <person name="Senoh A."/>
            <person name="Mizoguchi H."/>
            <person name="Goto Y."/>
            <person name="Shimizu F."/>
            <person name="Wakebe H."/>
            <person name="Hishigaki H."/>
            <person name="Watanabe T."/>
            <person name="Sugiyama A."/>
            <person name="Takemoto M."/>
            <person name="Kawakami B."/>
            <person name="Yamazaki M."/>
            <person name="Watanabe K."/>
            <person name="Kumagai A."/>
            <person name="Itakura S."/>
            <person name="Fukuzumi Y."/>
            <person name="Fujimori Y."/>
            <person name="Komiyama M."/>
            <person name="Tashiro H."/>
            <person name="Tanigami A."/>
            <person name="Fujiwara T."/>
            <person name="Ono T."/>
            <person name="Yamada K."/>
            <person name="Fujii Y."/>
            <person name="Ozaki K."/>
            <person name="Hirao M."/>
            <person name="Ohmori Y."/>
            <person name="Kawabata A."/>
            <person name="Hikiji T."/>
            <person name="Kobatake N."/>
            <person name="Inagaki H."/>
            <person name="Ikema Y."/>
            <person name="Okamoto S."/>
            <person name="Okitani R."/>
            <person name="Kawakami T."/>
            <person name="Noguchi S."/>
            <person name="Itoh T."/>
            <person name="Shigeta K."/>
            <person name="Senba T."/>
            <person name="Matsumura K."/>
            <person name="Nakajima Y."/>
            <person name="Mizuno T."/>
            <person name="Morinaga M."/>
            <person name="Sasaki M."/>
            <person name="Togashi T."/>
            <person name="Oyama M."/>
            <person name="Hata H."/>
            <person name="Watanabe M."/>
            <person name="Komatsu T."/>
            <person name="Mizushima-Sugano J."/>
            <person name="Satoh T."/>
            <person name="Shirai Y."/>
            <person name="Takahashi Y."/>
            <person name="Nakagawa K."/>
            <person name="Okumura K."/>
            <person name="Nagase T."/>
            <person name="Nomura N."/>
            <person name="Kikuchi H."/>
            <person name="Masuho Y."/>
            <person name="Yamashita R."/>
            <person name="Nakai K."/>
            <person name="Yada T."/>
            <person name="Nakamura Y."/>
            <person name="Ohara O."/>
            <person name="Isogai T."/>
            <person name="Sugano S."/>
        </authorList>
    </citation>
    <scope>NUCLEOTIDE SEQUENCE [LARGE SCALE MRNA] (ISOFORM 3)</scope>
    <source>
        <tissue>Trachea</tissue>
    </source>
</reference>
<reference key="9">
    <citation type="submission" date="2004-06" db="EMBL/GenBank/DDBJ databases">
        <title>Cloning of human full open reading frames in Gateway(TM) system entry vector (pDONR201).</title>
        <authorList>
            <person name="Ebert L."/>
            <person name="Schick M."/>
            <person name="Neubert P."/>
            <person name="Schatten R."/>
            <person name="Henze S."/>
            <person name="Korn B."/>
        </authorList>
    </citation>
    <scope>NUCLEOTIDE SEQUENCE [LARGE SCALE MRNA] (ISOFORM 1)</scope>
</reference>
<reference key="10">
    <citation type="journal article" date="2003" name="Nature">
        <title>The DNA sequence and analysis of human chromosome 6.</title>
        <authorList>
            <person name="Mungall A.J."/>
            <person name="Palmer S.A."/>
            <person name="Sims S.K."/>
            <person name="Edwards C.A."/>
            <person name="Ashurst J.L."/>
            <person name="Wilming L."/>
            <person name="Jones M.C."/>
            <person name="Horton R."/>
            <person name="Hunt S.E."/>
            <person name="Scott C.E."/>
            <person name="Gilbert J.G.R."/>
            <person name="Clamp M.E."/>
            <person name="Bethel G."/>
            <person name="Milne S."/>
            <person name="Ainscough R."/>
            <person name="Almeida J.P."/>
            <person name="Ambrose K.D."/>
            <person name="Andrews T.D."/>
            <person name="Ashwell R.I.S."/>
            <person name="Babbage A.K."/>
            <person name="Bagguley C.L."/>
            <person name="Bailey J."/>
            <person name="Banerjee R."/>
            <person name="Barker D.J."/>
            <person name="Barlow K.F."/>
            <person name="Bates K."/>
            <person name="Beare D.M."/>
            <person name="Beasley H."/>
            <person name="Beasley O."/>
            <person name="Bird C.P."/>
            <person name="Blakey S.E."/>
            <person name="Bray-Allen S."/>
            <person name="Brook J."/>
            <person name="Brown A.J."/>
            <person name="Brown J.Y."/>
            <person name="Burford D.C."/>
            <person name="Burrill W."/>
            <person name="Burton J."/>
            <person name="Carder C."/>
            <person name="Carter N.P."/>
            <person name="Chapman J.C."/>
            <person name="Clark S.Y."/>
            <person name="Clark G."/>
            <person name="Clee C.M."/>
            <person name="Clegg S."/>
            <person name="Cobley V."/>
            <person name="Collier R.E."/>
            <person name="Collins J.E."/>
            <person name="Colman L.K."/>
            <person name="Corby N.R."/>
            <person name="Coville G.J."/>
            <person name="Culley K.M."/>
            <person name="Dhami P."/>
            <person name="Davies J."/>
            <person name="Dunn M."/>
            <person name="Earthrowl M.E."/>
            <person name="Ellington A.E."/>
            <person name="Evans K.A."/>
            <person name="Faulkner L."/>
            <person name="Francis M.D."/>
            <person name="Frankish A."/>
            <person name="Frankland J."/>
            <person name="French L."/>
            <person name="Garner P."/>
            <person name="Garnett J."/>
            <person name="Ghori M.J."/>
            <person name="Gilby L.M."/>
            <person name="Gillson C.J."/>
            <person name="Glithero R.J."/>
            <person name="Grafham D.V."/>
            <person name="Grant M."/>
            <person name="Gribble S."/>
            <person name="Griffiths C."/>
            <person name="Griffiths M.N.D."/>
            <person name="Hall R."/>
            <person name="Halls K.S."/>
            <person name="Hammond S."/>
            <person name="Harley J.L."/>
            <person name="Hart E.A."/>
            <person name="Heath P.D."/>
            <person name="Heathcott R."/>
            <person name="Holmes S.J."/>
            <person name="Howden P.J."/>
            <person name="Howe K.L."/>
            <person name="Howell G.R."/>
            <person name="Huckle E."/>
            <person name="Humphray S.J."/>
            <person name="Humphries M.D."/>
            <person name="Hunt A.R."/>
            <person name="Johnson C.M."/>
            <person name="Joy A.A."/>
            <person name="Kay M."/>
            <person name="Keenan S.J."/>
            <person name="Kimberley A.M."/>
            <person name="King A."/>
            <person name="Laird G.K."/>
            <person name="Langford C."/>
            <person name="Lawlor S."/>
            <person name="Leongamornlert D.A."/>
            <person name="Leversha M."/>
            <person name="Lloyd C.R."/>
            <person name="Lloyd D.M."/>
            <person name="Loveland J.E."/>
            <person name="Lovell J."/>
            <person name="Martin S."/>
            <person name="Mashreghi-Mohammadi M."/>
            <person name="Maslen G.L."/>
            <person name="Matthews L."/>
            <person name="McCann O.T."/>
            <person name="McLaren S.J."/>
            <person name="McLay K."/>
            <person name="McMurray A."/>
            <person name="Moore M.J.F."/>
            <person name="Mullikin J.C."/>
            <person name="Niblett D."/>
            <person name="Nickerson T."/>
            <person name="Novik K.L."/>
            <person name="Oliver K."/>
            <person name="Overton-Larty E.K."/>
            <person name="Parker A."/>
            <person name="Patel R."/>
            <person name="Pearce A.V."/>
            <person name="Peck A.I."/>
            <person name="Phillimore B.J.C.T."/>
            <person name="Phillips S."/>
            <person name="Plumb R.W."/>
            <person name="Porter K.M."/>
            <person name="Ramsey Y."/>
            <person name="Ranby S.A."/>
            <person name="Rice C.M."/>
            <person name="Ross M.T."/>
            <person name="Searle S.M."/>
            <person name="Sehra H.K."/>
            <person name="Sheridan E."/>
            <person name="Skuce C.D."/>
            <person name="Smith S."/>
            <person name="Smith M."/>
            <person name="Spraggon L."/>
            <person name="Squares S.L."/>
            <person name="Steward C.A."/>
            <person name="Sycamore N."/>
            <person name="Tamlyn-Hall G."/>
            <person name="Tester J."/>
            <person name="Theaker A.J."/>
            <person name="Thomas D.W."/>
            <person name="Thorpe A."/>
            <person name="Tracey A."/>
            <person name="Tromans A."/>
            <person name="Tubby B."/>
            <person name="Wall M."/>
            <person name="Wallis J.M."/>
            <person name="West A.P."/>
            <person name="White S.S."/>
            <person name="Whitehead S.L."/>
            <person name="Whittaker H."/>
            <person name="Wild A."/>
            <person name="Willey D.J."/>
            <person name="Wilmer T.E."/>
            <person name="Wood J.M."/>
            <person name="Wray P.W."/>
            <person name="Wyatt J.C."/>
            <person name="Young L."/>
            <person name="Younger R.M."/>
            <person name="Bentley D.R."/>
            <person name="Coulson A."/>
            <person name="Durbin R.M."/>
            <person name="Hubbard T."/>
            <person name="Sulston J.E."/>
            <person name="Dunham I."/>
            <person name="Rogers J."/>
            <person name="Beck S."/>
        </authorList>
    </citation>
    <scope>NUCLEOTIDE SEQUENCE [LARGE SCALE GENOMIC DNA]</scope>
</reference>
<reference key="11">
    <citation type="submission" date="2005-09" db="EMBL/GenBank/DDBJ databases">
        <authorList>
            <person name="Mural R.J."/>
            <person name="Istrail S."/>
            <person name="Sutton G.G."/>
            <person name="Florea L."/>
            <person name="Halpern A.L."/>
            <person name="Mobarry C.M."/>
            <person name="Lippert R."/>
            <person name="Walenz B."/>
            <person name="Shatkay H."/>
            <person name="Dew I."/>
            <person name="Miller J.R."/>
            <person name="Flanigan M.J."/>
            <person name="Edwards N.J."/>
            <person name="Bolanos R."/>
            <person name="Fasulo D."/>
            <person name="Halldorsson B.V."/>
            <person name="Hannenhalli S."/>
            <person name="Turner R."/>
            <person name="Yooseph S."/>
            <person name="Lu F."/>
            <person name="Nusskern D.R."/>
            <person name="Shue B.C."/>
            <person name="Zheng X.H."/>
            <person name="Zhong F."/>
            <person name="Delcher A.L."/>
            <person name="Huson D.H."/>
            <person name="Kravitz S.A."/>
            <person name="Mouchard L."/>
            <person name="Reinert K."/>
            <person name="Remington K.A."/>
            <person name="Clark A.G."/>
            <person name="Waterman M.S."/>
            <person name="Eichler E.E."/>
            <person name="Adams M.D."/>
            <person name="Hunkapiller M.W."/>
            <person name="Myers E.W."/>
            <person name="Venter J.C."/>
        </authorList>
    </citation>
    <scope>NUCLEOTIDE SEQUENCE [LARGE SCALE GENOMIC DNA]</scope>
</reference>
<reference key="12">
    <citation type="journal article" date="2004" name="Genome Res.">
        <title>The status, quality, and expansion of the NIH full-length cDNA project: the Mammalian Gene Collection (MGC).</title>
        <authorList>
            <consortium name="The MGC Project Team"/>
        </authorList>
    </citation>
    <scope>NUCLEOTIDE SEQUENCE [LARGE SCALE MRNA] (ISOFORM 1)</scope>
    <scope>NUCLEOTIDE SEQUENCE [LARGE SCALE MRNA] OF 334-740 (ISOFORM 2)</scope>
    <source>
        <tissue>Eye</tissue>
    </source>
</reference>
<reference key="13">
    <citation type="journal article" date="1999" name="EMBO J.">
        <title>The Pax3-FKHR oncoprotein is unresponsive to the Pax3-associated repressor hDaxx.</title>
        <authorList>
            <person name="Hollenbach A.D."/>
            <person name="Sublett J.E."/>
            <person name="McPherson C.J."/>
            <person name="Grosveld G."/>
        </authorList>
    </citation>
    <scope>INTERACTION WITH PAX3 AND PAX7</scope>
    <scope>PHOSPHORYLATION</scope>
</reference>
<reference key="14">
    <citation type="journal article" date="2000" name="J. Exp. Med.">
        <title>Promyelocytic leukemia protein (PML) and Daxx participate in a novel nuclear pathway for apoptosis.</title>
        <authorList>
            <person name="Zhong S."/>
            <person name="Salomoni P."/>
            <person name="Ronchetti S."/>
            <person name="Guo A."/>
            <person name="Ruggero D."/>
            <person name="Pandolfi P.P."/>
        </authorList>
    </citation>
    <scope>INTERACTION WITH PML</scope>
</reference>
<reference key="15">
    <citation type="journal article" date="2000" name="Mol. Cell. Biol.">
        <title>Sequestration and inhibition of Daxx-mediated transcriptional repression by PML.</title>
        <authorList>
            <person name="Li H."/>
            <person name="Leo C."/>
            <person name="Zhu J."/>
            <person name="Wu X."/>
            <person name="O'Neil J."/>
            <person name="Park E.-J."/>
            <person name="Chen J.D."/>
        </authorList>
    </citation>
    <scope>INTERACTION WITH SUMOYLATED PML; HDAC1; HDAC2 AND HDAC3</scope>
    <scope>SUBCELLULAR LOCATION</scope>
</reference>
<reference key="16">
    <citation type="journal article" date="2000" name="Mol. Cell. Biol.">
        <title>Inhibition of Daxx-mediated apoptosis by heat shock protein 27.</title>
        <authorList>
            <person name="Charette S.J."/>
            <person name="Lavoie J.N."/>
            <person name="Lambert H."/>
            <person name="Landry J."/>
        </authorList>
    </citation>
    <scope>INTERACTION WITH HSPB1</scope>
</reference>
<reference key="17">
    <citation type="journal article" date="2001" name="J. Biol. Chem.">
        <title>Apoptosis signal-regulating kinase 1 controls the proapoptotic function of death-associated protein (Daxx) in the cytoplasm.</title>
        <authorList>
            <person name="Ko Y.-G."/>
            <person name="Kang Y.-S."/>
            <person name="Park H."/>
            <person name="Seol W."/>
            <person name="Kim J."/>
            <person name="Kim T."/>
            <person name="Park H.-S."/>
            <person name="Choi E.-J."/>
            <person name="Kim S."/>
        </authorList>
    </citation>
    <scope>INTERACTION WITH MAP3K5</scope>
    <scope>SUBCELLULAR LOCATION</scope>
</reference>
<reference key="18">
    <citation type="journal article" date="2001" name="Nat. Cell Biol.">
        <title>TGF-beta-induced apoptosis is mediated by the adapter protein Daxx that facilitates JNK activation.</title>
        <authorList>
            <person name="Perlman R."/>
            <person name="Schiemann W.P."/>
            <person name="Brooks M.W."/>
            <person name="Lodish H.F."/>
            <person name="Weinberg R.A."/>
        </authorList>
    </citation>
    <scope>INTERACTION WITH TGFBR2</scope>
</reference>
<reference key="19">
    <citation type="journal article" date="2002" name="Biochem. Biophys. Res. Commun.">
        <title>Modification of Daxx by small ubiquitin-related modifier-1.</title>
        <authorList>
            <person name="Jang M.-S."/>
            <person name="Ryu S.-W."/>
            <person name="Kim E."/>
        </authorList>
    </citation>
    <scope>SUMOYLATION AT LYS-630 AND LYS-631</scope>
    <scope>MUTAGENESIS OF LYS-630 AND LYS-631</scope>
</reference>
<reference key="20">
    <citation type="journal article" date="2002" name="J. Biol. Chem.">
        <title>The insulin-sensitive glucose transporter, GLUT4, interacts physically with Daxx. Two proteins with capacity to bind Ubc9 and conjugated to SUMO1.</title>
        <authorList>
            <person name="Lalioti V.S."/>
            <person name="Vergarajauregui S."/>
            <person name="Pulido D."/>
            <person name="Sandoval I.V."/>
        </authorList>
    </citation>
    <scope>INTERACTION WITH SLC2A4 AND UBE2I</scope>
    <scope>SUMOYLATION</scope>
    <scope>SUBCELLULAR LOCATION</scope>
</reference>
<reference key="21">
    <citation type="journal article" date="2002" name="J. Biol. Chem.">
        <title>Essential role of the 58-kDa microspherule protein in the modulation of Daxx-dependent transcriptional repression as revealed by nucleolar sequestration.</title>
        <authorList>
            <person name="Lin D.-Y."/>
            <person name="Shih H.-M."/>
        </authorList>
    </citation>
    <scope>INTERACTION WITH MCRS1</scope>
</reference>
<reference key="22">
    <citation type="journal article" date="2002" name="J. Cell Sci.">
        <title>Daxx and histone deacetylase II associate with chromatin through an interaction with core histones and the chromatin-associated protein Dek.</title>
        <authorList>
            <person name="Hollenbach A.D."/>
            <person name="McPherson C.J."/>
            <person name="Mientjes E.J."/>
            <person name="Iyengar R."/>
            <person name="Grosveld G."/>
        </authorList>
    </citation>
    <scope>FUNCTION</scope>
    <scope>PHOSPHORYLATION</scope>
    <scope>INTERACTION WITH HDAC2; HISTONES AND DEK</scope>
</reference>
<reference key="23">
    <citation type="journal article" date="2002" name="J. Gen. Virol.">
        <title>Hantavirus nucleocapsid protein interacts with the Fas-mediated apoptosis enhancer Daxx.</title>
        <authorList>
            <person name="Li X.D."/>
            <person name="Maekelae T.P."/>
            <person name="Guo D."/>
            <person name="Soliymani R."/>
            <person name="Koistinen V."/>
            <person name="Vapalahti O."/>
            <person name="Vaheri A."/>
            <person name="Lankinen H."/>
        </authorList>
    </citation>
    <scope>INTERACTION WITH PUUMALA HANTAVIRUS NUCLEOPROTEIN (MICROBIAL INFECTION)</scope>
</reference>
<reference key="24">
    <citation type="journal article" date="2003" name="Cancer Res.">
        <title>HIPK2 regulates transforming growth factor-beta-induced c-Jun NH(2)-terminal kinase activation and apoptosis in human hepatoma cells.</title>
        <authorList>
            <person name="Hofmann T.G."/>
            <person name="Stollberg N."/>
            <person name="Schmitz M.L."/>
            <person name="Will H."/>
        </authorList>
    </citation>
    <scope>INTERACTION WITH HIPK2</scope>
</reference>
<reference key="25">
    <citation type="journal article" date="2003" name="J. Biol. Chem.">
        <title>Role of the ASK1-SEK1-JNK1-HIPK1 signal in Daxx trafficking and ASK1 oligomerization.</title>
        <authorList>
            <person name="Song J.J."/>
            <person name="Lee Y.J."/>
        </authorList>
    </citation>
    <scope>OLIGOMERIZATION</scope>
    <scope>SUBCELLULAR LOCATION</scope>
    <scope>INTERACTION WITH MAP3K5</scope>
    <scope>MUTAGENESIS OF SER-668 AND SER-671</scope>
    <scope>PHOSPHORYLATION AT SER-668</scope>
</reference>
<reference key="26">
    <citation type="journal article" date="2003" name="Mol. Cell. Biol.">
        <title>Homeodomain-interacting protein kinase 1 modulates Daxx localization, phosphorylation, and transcriptional activity.</title>
        <authorList>
            <person name="Ecsedy J.A."/>
            <person name="Michaelson J.S."/>
            <person name="Leder P."/>
        </authorList>
    </citation>
    <scope>INTERACTION WITH HIPK1</scope>
</reference>
<reference key="27">
    <citation type="journal article" date="2003" name="Proc. Natl. Acad. Sci. U.S.A.">
        <title>The ATRX syndrome protein forms a chromatin-remodeling complex with Daxx and localizes in promyelocytic leukemia nuclear bodies.</title>
        <authorList>
            <person name="Xue Y."/>
            <person name="Gibbons R."/>
            <person name="Yan Z."/>
            <person name="Yang D."/>
            <person name="McDowell T.L."/>
            <person name="Sechi S."/>
            <person name="Qin J."/>
            <person name="Zhou S."/>
            <person name="Higgs D."/>
            <person name="Wang W."/>
        </authorList>
    </citation>
    <scope>INTERACTION WITH ATRX</scope>
    <scope>SUBCELLULAR LOCATION</scope>
</reference>
<reference key="28">
    <citation type="journal article" date="2003" name="J. Virol.">
        <title>Adenovirus E1B 55-kilodalton oncoprotein binds to Daxx and eliminates enhancement of p53-dependent transcription by DAXX.</title>
        <authorList>
            <person name="Zhao L.Y."/>
            <person name="Colosimo A.L."/>
            <person name="Liu Y."/>
            <person name="Wan Y."/>
            <person name="Liao D."/>
        </authorList>
    </citation>
    <scope>INTERACTION WITH HADV5 E1B-55K (MICROBIAL INFECTION)</scope>
</reference>
<reference key="29">
    <citation type="journal article" date="2004" name="Biochem. Biophys. Res. Commun.">
        <title>Daxx-mediated transcriptional repression of MMP1 gene is reversed by SPOP.</title>
        <authorList>
            <person name="La M."/>
            <person name="Kim K."/>
            <person name="Park J."/>
            <person name="Won J."/>
            <person name="Lee J.-H."/>
            <person name="Fu Y.M."/>
            <person name="Meadows G.G."/>
            <person name="Joe C.O."/>
        </authorList>
    </citation>
    <scope>INTERACTION WITH SPOP</scope>
</reference>
<reference key="30">
    <citation type="journal article" date="2004" name="J. Biol. Chem.">
        <title>A novel transcription regulatory complex containing death domain-associated protein and the ATR-X syndrome protein.</title>
        <authorList>
            <person name="Tang J."/>
            <person name="Wu S."/>
            <person name="Liu H."/>
            <person name="Stratt R."/>
            <person name="Barak O.G."/>
            <person name="Shiekhattar R."/>
            <person name="Picketts D.J."/>
            <person name="Yang X."/>
        </authorList>
    </citation>
    <scope>FUNCTION</scope>
    <scope>INTERACTION WITH ATRX</scope>
    <scope>SUBCELLULAR LOCATION</scope>
</reference>
<reference key="31">
    <citation type="journal article" date="2004" name="J. Biol. Chem.">
        <title>Negative regulation of p53 functions by Daxx and the involvement of MDM2.</title>
        <authorList>
            <person name="Zhao L.Y."/>
            <person name="Liu J."/>
            <person name="Sidhu G.S."/>
            <person name="Niu Y."/>
            <person name="Liu Y."/>
            <person name="Wang R."/>
            <person name="Liao D."/>
        </authorList>
    </citation>
    <scope>FUNCTION</scope>
    <scope>INTERACTION WITH MDM2 AND TP53</scope>
</reference>
<reference key="32">
    <citation type="journal article" date="2004" name="Proc. Natl. Acad. Sci. U.S.A.">
        <title>DAXX interacts with heat shock factor 1 during stress activation and enhances its transcriptional activity.</title>
        <authorList>
            <person name="Boellmann F."/>
            <person name="Guettouche T."/>
            <person name="Guo Y."/>
            <person name="Fenna M."/>
            <person name="Mnayer L."/>
            <person name="Voellmy R."/>
        </authorList>
    </citation>
    <scope>FUNCTION</scope>
    <scope>INTERACTION WITH HSF1</scope>
</reference>
<reference key="33">
    <citation type="journal article" date="2006" name="Cell">
        <title>Global, in vivo, and site-specific phosphorylation dynamics in signaling networks.</title>
        <authorList>
            <person name="Olsen J.V."/>
            <person name="Blagoev B."/>
            <person name="Gnad F."/>
            <person name="Macek B."/>
            <person name="Kumar C."/>
            <person name="Mortensen P."/>
            <person name="Mann M."/>
        </authorList>
    </citation>
    <scope>IDENTIFICATION BY MASS SPECTROMETRY [LARGE SCALE ANALYSIS]</scope>
    <source>
        <tissue>Cervix carcinoma</tissue>
    </source>
</reference>
<reference key="34">
    <citation type="journal article" date="2006" name="J. Biol. Chem.">
        <title>BTB domain-containing speckle-type POZ protein (SPOP) serves as an adaptor of Daxx for ubiquitination by Cul3-based ubiquitin ligase.</title>
        <authorList>
            <person name="Kwon J.E."/>
            <person name="La M."/>
            <person name="Oh K.H."/>
            <person name="Oh Y.M."/>
            <person name="Kim G.R."/>
            <person name="Seol J.H."/>
            <person name="Baek S.H."/>
            <person name="Chiba T."/>
            <person name="Tanaka K."/>
            <person name="Bang O.S."/>
            <person name="Joe C.O."/>
            <person name="Chung C.H."/>
        </authorList>
    </citation>
    <scope>IDENTIFICATION IN A COMPLEX WITH CUL3 AND SPOP</scope>
    <scope>UBIQUITINATION</scope>
</reference>
<reference key="35">
    <citation type="journal article" date="2006" name="Mol. Cell">
        <title>Role of SUMO-interacting motif in Daxx SUMO modification, subnuclear localization, and repression of sumoylated transcription factors.</title>
        <authorList>
            <person name="Lin D.Y."/>
            <person name="Huang Y.S."/>
            <person name="Jeng J.C."/>
            <person name="Kuo H.Y."/>
            <person name="Chang C.C."/>
            <person name="Chao T.T."/>
            <person name="Ho C.C."/>
            <person name="Chen Y.C."/>
            <person name="Lin T.P."/>
            <person name="Fang H.I."/>
            <person name="Hung C.C."/>
            <person name="Suen C.S."/>
            <person name="Hwang M.J."/>
            <person name="Chang K.S."/>
            <person name="Maul G.G."/>
            <person name="Shih H.M."/>
        </authorList>
    </citation>
    <scope>FUNCTION</scope>
    <scope>SUBCELLULAR LOCATION</scope>
    <scope>SUMOYLATION</scope>
    <scope>SUMO INTERACTION MOTIF</scope>
    <scope>MUTAGENESIS OF 733-ILE--ASP-740</scope>
</reference>
<reference key="36">
    <citation type="journal article" date="2006" name="Nat. Biotechnol.">
        <title>A probability-based approach for high-throughput protein phosphorylation analysis and site localization.</title>
        <authorList>
            <person name="Beausoleil S.A."/>
            <person name="Villen J."/>
            <person name="Gerber S.A."/>
            <person name="Rush J."/>
            <person name="Gygi S.P."/>
        </authorList>
    </citation>
    <scope>PHOSPHORYLATION [LARGE SCALE ANALYSIS] AT SER-702</scope>
    <scope>IDENTIFICATION BY MASS SPECTROMETRY [LARGE SCALE ANALYSIS]</scope>
    <source>
        <tissue>Cervix carcinoma</tissue>
    </source>
</reference>
<reference key="37">
    <citation type="journal article" date="2006" name="Nat. Cell Biol.">
        <title>Critical role for Daxx in regulating Mdm2.</title>
        <authorList>
            <person name="Tang J."/>
            <person name="Qu L.K."/>
            <person name="Zhang J."/>
            <person name="Wang W."/>
            <person name="Michaelson J.S."/>
            <person name="Degenhardt Y.Y."/>
            <person name="El-Deiry W.S."/>
            <person name="Yang X."/>
        </authorList>
    </citation>
    <scope>FUNCTION</scope>
    <scope>IDENTIFICATION IN A COMPLEX WITH MDM2 AND USP7</scope>
    <scope>INTERACTION WITH MDM2; TP53 AND USP7</scope>
    <scope>SUBCELLULAR LOCATION</scope>
</reference>
<reference key="38">
    <citation type="journal article" date="2007" name="Cancer Res.">
        <title>Daxx cooperates with the Axin/HIPK2/p53 complex to induce cell death.</title>
        <authorList>
            <person name="Li Q."/>
            <person name="Wang X."/>
            <person name="Wu X."/>
            <person name="Rui Y."/>
            <person name="Liu W."/>
            <person name="Wang J."/>
            <person name="Wang X."/>
            <person name="Liou Y.C."/>
            <person name="Ye Z."/>
            <person name="Lin S.C."/>
        </authorList>
    </citation>
    <scope>INTERACTION WITH AXIN1</scope>
</reference>
<reference key="39">
    <citation type="journal article" date="2008" name="EMBO J.">
        <title>The tumour suppressor RASSF1A promotes MDM2 self-ubiquitination by disrupting the MDM2-DAXX-HAUSP complex.</title>
        <authorList>
            <person name="Song M.S."/>
            <person name="Song S.J."/>
            <person name="Kim S.Y."/>
            <person name="Oh H.J."/>
            <person name="Lim D.S."/>
        </authorList>
    </citation>
    <scope>IDENTIFICATION IN A COMPLEX WITH MDM2; RASSF1 AND USP7</scope>
    <scope>INTERACTION WITH RASSF1; USP7 AND MDM2</scope>
    <scope>SUBCELLULAR LOCATION</scope>
</reference>
<reference key="40">
    <citation type="journal article" date="2008" name="J. Proteome Res.">
        <title>Combining protein-based IMAC, peptide-based IMAC, and MudPIT for efficient phosphoproteomic analysis.</title>
        <authorList>
            <person name="Cantin G.T."/>
            <person name="Yi W."/>
            <person name="Lu B."/>
            <person name="Park S.K."/>
            <person name="Xu T."/>
            <person name="Lee J.-D."/>
            <person name="Yates J.R. III"/>
        </authorList>
    </citation>
    <scope>PHOSPHORYLATION [LARGE SCALE ANALYSIS] AT SER-671 AND SER-702</scope>
    <scope>IDENTIFICATION BY MASS SPECTROMETRY [LARGE SCALE ANALYSIS]</scope>
    <source>
        <tissue>Cervix carcinoma</tissue>
    </source>
</reference>
<reference key="41">
    <citation type="journal article" date="2008" name="J. Virol.">
        <title>Nuclear domain 10 components promyelocytic leukemia protein and hDaxx independently contribute to an intrinsic antiviral defense against human cytomegalovirus infection.</title>
        <authorList>
            <person name="Tavalai N."/>
            <person name="Papior P."/>
            <person name="Rechter S."/>
            <person name="Stamminger T."/>
        </authorList>
    </citation>
    <scope>FUNCTION IN HCMV RESTRICTION</scope>
</reference>
<reference key="42">
    <citation type="journal article" date="2008" name="J. Virol.">
        <title>Human cytomegalovirus protein pp71 displaces the chromatin-associated factor ATRX from nuclear domain 10 at early stages of infection.</title>
        <authorList>
            <person name="Lukashchuk V."/>
            <person name="McFarlane S."/>
            <person name="Everett R.D."/>
            <person name="Preston C.M."/>
        </authorList>
    </citation>
    <scope>INTERACTION WITH HCMV PP71 (MICROBIAL INFECTION)</scope>
</reference>
<reference key="43">
    <citation type="journal article" date="2008" name="Proc. Natl. Acad. Sci. U.S.A.">
        <title>A quantitative atlas of mitotic phosphorylation.</title>
        <authorList>
            <person name="Dephoure N."/>
            <person name="Zhou C."/>
            <person name="Villen J."/>
            <person name="Beausoleil S.A."/>
            <person name="Bakalarski C.E."/>
            <person name="Elledge S.J."/>
            <person name="Gygi S.P."/>
        </authorList>
    </citation>
    <scope>PHOSPHORYLATION [LARGE SCALE ANALYSIS] AT SER-178; SER-213; SER-495; SER-668; SER-671; SER-688; SER-702; SER-737 AND SER-739</scope>
    <scope>IDENTIFICATION BY MASS SPECTROMETRY [LARGE SCALE ANALYSIS]</scope>
    <source>
        <tissue>Cervix carcinoma</tissue>
    </source>
</reference>
<reference key="44">
    <citation type="journal article" date="2009" name="Anal. Chem.">
        <title>Lys-N and trypsin cover complementary parts of the phosphoproteome in a refined SCX-based approach.</title>
        <authorList>
            <person name="Gauci S."/>
            <person name="Helbig A.O."/>
            <person name="Slijper M."/>
            <person name="Krijgsveld J."/>
            <person name="Heck A.J."/>
            <person name="Mohammed S."/>
        </authorList>
    </citation>
    <scope>IDENTIFICATION BY MASS SPECTROMETRY [LARGE SCALE ANALYSIS]</scope>
</reference>
<reference key="45">
    <citation type="journal article" date="2009" name="Sci. Signal.">
        <title>Quantitative phosphoproteomic analysis of T cell receptor signaling reveals system-wide modulation of protein-protein interactions.</title>
        <authorList>
            <person name="Mayya V."/>
            <person name="Lundgren D.H."/>
            <person name="Hwang S.-I."/>
            <person name="Rezaul K."/>
            <person name="Wu L."/>
            <person name="Eng J.K."/>
            <person name="Rodionov V."/>
            <person name="Han D.K."/>
        </authorList>
    </citation>
    <scope>PHOSPHORYLATION [LARGE SCALE ANALYSIS] AT SER-702; SER-737 AND SER-739</scope>
    <scope>IDENTIFICATION BY MASS SPECTROMETRY [LARGE SCALE ANALYSIS]</scope>
    <source>
        <tissue>Leukemic T-cell</tissue>
    </source>
</reference>
<reference key="46">
    <citation type="journal article" date="2009" name="Science">
        <title>Lysine acetylation targets protein complexes and co-regulates major cellular functions.</title>
        <authorList>
            <person name="Choudhary C."/>
            <person name="Kumar C."/>
            <person name="Gnad F."/>
            <person name="Nielsen M.L."/>
            <person name="Rehman M."/>
            <person name="Walther T.C."/>
            <person name="Olsen J.V."/>
            <person name="Mann M."/>
        </authorList>
    </citation>
    <scope>ACETYLATION [LARGE SCALE ANALYSIS] AT LYS-512</scope>
    <scope>IDENTIFICATION BY MASS SPECTROMETRY [LARGE SCALE ANALYSIS]</scope>
</reference>
<reference key="47">
    <citation type="journal article" date="2010" name="Biochem. Biophys. Res. Commun.">
        <title>Daxx is reciprocally regulated by Mdm2 and Hausp.</title>
        <authorList>
            <person name="Tang J."/>
            <person name="Qu L."/>
            <person name="Pang M."/>
            <person name="Yang X."/>
        </authorList>
    </citation>
    <scope>UBIQUITINATION</scope>
    <scope>DEUBIQUITINATION BY USP7</scope>
</reference>
<reference key="48">
    <citation type="journal article" date="2010" name="Genes Dev.">
        <title>The death-associated protein DAXX is a novel histone chaperone involved in the replication-independent deposition of H3.3.</title>
        <authorList>
            <person name="Drane P."/>
            <person name="Ouararhni K."/>
            <person name="Depaux A."/>
            <person name="Shuaib M."/>
            <person name="Hamiche A."/>
        </authorList>
    </citation>
    <scope>FUNCTION AS HISTONE CHAPERONE</scope>
    <scope>FUNCTION OF THE ATRX:DAXX COMPLEX</scope>
    <scope>INTERACTION WITH HISTONE H3.3</scope>
</reference>
<reference key="49">
    <citation type="journal article" date="2010" name="J. Virol.">
        <title>Human cytomegalovirus IE72 protein interacts with the transcriptional repressor hDaxx to regulate LUNA gene expression during lytic infection.</title>
        <authorList>
            <person name="Reeves M."/>
            <person name="Woodhall D."/>
            <person name="Compton T."/>
            <person name="Sinclair J."/>
        </authorList>
    </citation>
    <scope>INTERACTION WITH HHV-5 PROTEIN UL123</scope>
</reference>
<reference key="50">
    <citation type="journal article" date="2010" name="Proc. Natl. Acad. Sci. U.S.A.">
        <title>Daxx is an H3.3-specific histone chaperone and cooperates with ATRX in replication-independent chromatin assembly at telomeres.</title>
        <authorList>
            <person name="Lewis P.W."/>
            <person name="Elsaesser S.J."/>
            <person name="Noh K.M."/>
            <person name="Stadler S.C."/>
            <person name="Allis C.D."/>
        </authorList>
    </citation>
    <scope>FUNCTION AS HISTONE H3.3 CHAPERONE</scope>
    <scope>INTERACTION WITH HISTONE H3.3</scope>
</reference>
<reference key="51">
    <citation type="journal article" date="2010" name="Sci. Signal.">
        <title>Quantitative phosphoproteomics reveals widespread full phosphorylation site occupancy during mitosis.</title>
        <authorList>
            <person name="Olsen J.V."/>
            <person name="Vermeulen M."/>
            <person name="Santamaria A."/>
            <person name="Kumar C."/>
            <person name="Miller M.L."/>
            <person name="Jensen L.J."/>
            <person name="Gnad F."/>
            <person name="Cox J."/>
            <person name="Jensen T.S."/>
            <person name="Nigg E.A."/>
            <person name="Brunak S."/>
            <person name="Mann M."/>
        </authorList>
    </citation>
    <scope>PHOSPHORYLATION [LARGE SCALE ANALYSIS] AT SER-495; SER-702; SER-737 AND SER-739</scope>
    <scope>IDENTIFICATION BY MASS SPECTROMETRY [LARGE SCALE ANALYSIS]</scope>
    <source>
        <tissue>Cervix carcinoma</tissue>
    </source>
</reference>
<reference key="52">
    <citation type="journal article" date="2011" name="BMC Syst. Biol.">
        <title>Initial characterization of the human central proteome.</title>
        <authorList>
            <person name="Burkard T.R."/>
            <person name="Planyavsky M."/>
            <person name="Kaupe I."/>
            <person name="Breitwieser F.P."/>
            <person name="Buerckstuemmer T."/>
            <person name="Bennett K.L."/>
            <person name="Superti-Furga G."/>
            <person name="Colinge J."/>
        </authorList>
    </citation>
    <scope>IDENTIFICATION BY MASS SPECTROMETRY [LARGE SCALE ANALYSIS]</scope>
</reference>
<reference key="53">
    <citation type="journal article" date="2011" name="Sci. Signal.">
        <title>System-wide temporal characterization of the proteome and phosphoproteome of human embryonic stem cell differentiation.</title>
        <authorList>
            <person name="Rigbolt K.T."/>
            <person name="Prokhorova T.A."/>
            <person name="Akimov V."/>
            <person name="Henningsen J."/>
            <person name="Johansen P.T."/>
            <person name="Kratchmarova I."/>
            <person name="Kassem M."/>
            <person name="Mann M."/>
            <person name="Olsen J.V."/>
            <person name="Blagoev B."/>
        </authorList>
    </citation>
    <scope>PHOSPHORYLATION [LARGE SCALE ANALYSIS] AT SER-495 AND SER-702</scope>
    <scope>IDENTIFICATION BY MASS SPECTROMETRY [LARGE SCALE ANALYSIS]</scope>
</reference>
<reference key="54">
    <citation type="journal article" date="2013" name="Genome Res.">
        <title>DAXX-dependent supply of soluble (H3.3-H4) dimers to PML bodies pending deposition into chromatin.</title>
        <authorList>
            <person name="Delbarre E."/>
            <person name="Ivanauskiene K."/>
            <person name="Kuntziger T."/>
            <person name="Collas P."/>
        </authorList>
    </citation>
    <scope>FUNCTION</scope>
    <scope>SUBCELLULAR LOCATION</scope>
</reference>
<reference key="55">
    <citation type="journal article" date="2013" name="J. Proteome Res.">
        <title>Toward a comprehensive characterization of a human cancer cell phosphoproteome.</title>
        <authorList>
            <person name="Zhou H."/>
            <person name="Di Palma S."/>
            <person name="Preisinger C."/>
            <person name="Peng M."/>
            <person name="Polat A.N."/>
            <person name="Heck A.J."/>
            <person name="Mohammed S."/>
        </authorList>
    </citation>
    <scope>PHOSPHORYLATION [LARGE SCALE ANALYSIS] AT SER-178; SER-412; SER-424; SER-495; SER-671; SER-688 AND SER-702</scope>
    <scope>IDENTIFICATION BY MASS SPECTROMETRY [LARGE SCALE ANALYSIS]</scope>
    <source>
        <tissue>Cervix carcinoma</tissue>
        <tissue>Erythroleukemia</tissue>
    </source>
</reference>
<reference key="56">
    <citation type="journal article" date="2014" name="Cell Cycle">
        <title>Dynamics of histone H3.3 deposition in proliferating and senescent cells reveals a DAXX-dependent targeting to PML-NBs important for pericentromeric heterochromatin organization.</title>
        <authorList>
            <person name="Corpet A."/>
            <person name="Olbrich T."/>
            <person name="Gwerder M."/>
            <person name="Fink D."/>
            <person name="Stucki M."/>
        </authorList>
    </citation>
    <scope>FUNCTION</scope>
    <scope>SUBCELLULAR LOCATION</scope>
</reference>
<reference key="57">
    <citation type="journal article" date="2014" name="J. Proteomics">
        <title>An enzyme assisted RP-RPLC approach for in-depth analysis of human liver phosphoproteome.</title>
        <authorList>
            <person name="Bian Y."/>
            <person name="Song C."/>
            <person name="Cheng K."/>
            <person name="Dong M."/>
            <person name="Wang F."/>
            <person name="Huang J."/>
            <person name="Sun D."/>
            <person name="Wang L."/>
            <person name="Ye M."/>
            <person name="Zou H."/>
        </authorList>
    </citation>
    <scope>PHOSPHORYLATION [LARGE SCALE ANALYSIS] AT SER-25</scope>
    <scope>IDENTIFICATION BY MASS SPECTROMETRY [LARGE SCALE ANALYSIS]</scope>
    <source>
        <tissue>Liver</tissue>
    </source>
</reference>
<reference key="58">
    <citation type="journal article" date="2014" name="J. Virol.">
        <title>Viral reprogramming of the Daxx histone H3.3 chaperone during early Epstein-Barr virus infection.</title>
        <authorList>
            <person name="Tsai K."/>
            <person name="Chan L."/>
            <person name="Gibeault R."/>
            <person name="Conn K."/>
            <person name="Dheekollu J."/>
            <person name="Domsic J."/>
            <person name="Marmorstein R."/>
            <person name="Schang L.M."/>
            <person name="Lieberman P.M."/>
        </authorList>
    </citation>
    <scope>INTERACTION WITH EPSTEIN-BARR VIRUS PROTEIN BNRF1 (MICROBIAL INFECTION)</scope>
    <scope>SUBCELLULAR LOCATION</scope>
</reference>
<reference key="59">
    <citation type="journal article" date="2014" name="Mol. Cell">
        <title>Mislocalization of the centromeric histone variant CenH3/CENP-A in human cells depends on the chaperone DAXX.</title>
        <authorList>
            <person name="Lacoste N."/>
            <person name="Woolfe A."/>
            <person name="Tachiwana H."/>
            <person name="Garea A.V."/>
            <person name="Barth T."/>
            <person name="Cantaloube S."/>
            <person name="Kurumizaka H."/>
            <person name="Imhof A."/>
            <person name="Almouzni G."/>
        </authorList>
    </citation>
    <scope>FUNCTION</scope>
</reference>
<reference key="60">
    <citation type="journal article" date="2016" name="Sci. Rep.">
        <title>SUMO5, a novel poly-sumo isoform, regulates pml nuclear bodies.</title>
        <authorList>
            <person name="Liang Y.C."/>
            <person name="Lee C.C."/>
            <person name="Yao Y.L."/>
            <person name="Lai C.C."/>
            <person name="Schmitz M.L."/>
            <person name="Yang W.M."/>
        </authorList>
    </citation>
    <scope>INTERACTION WITH SUMO1P1/SUMO5</scope>
</reference>
<reference key="61">
    <citation type="journal article" date="2017" name="Nat. Struct. Mol. Biol.">
        <title>Site-specific mapping of the human SUMO proteome reveals co-modification with phosphorylation.</title>
        <authorList>
            <person name="Hendriks I.A."/>
            <person name="Lyon D."/>
            <person name="Young C."/>
            <person name="Jensen L.J."/>
            <person name="Vertegaal A.C."/>
            <person name="Nielsen M.L."/>
        </authorList>
    </citation>
    <scope>SUMOYLATION [LARGE SCALE ANALYSIS] AT LYS-142</scope>
    <scope>IDENTIFICATION BY MASS SPECTROMETRY [LARGE SCALE ANALYSIS]</scope>
</reference>
<reference key="62">
    <citation type="journal article" date="2010" name="Structure">
        <title>Structural characterization of the DAXX N-terminal helical bundle domain and its complex with Rassf1C.</title>
        <authorList>
            <person name="Escobar-Cabrera E."/>
            <person name="Lau D.K."/>
            <person name="Giovinazzi S."/>
            <person name="Ishov A.M."/>
            <person name="McIntosh L.P."/>
        </authorList>
    </citation>
    <scope>STRUCTURE BY NMR OF 55-144 IN COMPLEX WITH RASSF1</scope>
    <scope>INTERACTION WITH RASSF1</scope>
</reference>
<reference key="63">
    <citation type="journal article" date="2011" name="Biomol. NMR. Assign.">
        <title>NMR chemical shift assignments of a complex between SUMO-1 and SIM peptide derived from the C-terminus of Daxx.</title>
        <authorList>
            <person name="Naik M.T."/>
            <person name="Chang C.C."/>
            <person name="Naik N.M."/>
            <person name="Kung C.C."/>
            <person name="Shih H.M."/>
            <person name="Huang T.H."/>
        </authorList>
    </citation>
    <scope>STRUCTURE BY NMR OF 721-740</scope>
</reference>
<reference key="64">
    <citation type="journal article" date="2012" name="Nat. Struct. Mol. Biol.">
        <title>Structure of the variant histone H3.3-H4 heterodimer in complex with its chaperone DAXX.</title>
        <authorList>
            <person name="Liu C.P."/>
            <person name="Xiong C."/>
            <person name="Wang M."/>
            <person name="Yu Z."/>
            <person name="Yang N."/>
            <person name="Chen P."/>
            <person name="Zhang Z."/>
            <person name="Li G."/>
            <person name="Xu R.M."/>
        </authorList>
    </citation>
    <scope>X-RAY CRYSTALLOGRAPHY (2.8 ANGSTROMS) OF 184-390 IN COMPLEX WITH HISTONE H3.3/H4 DIMER</scope>
    <scope>MUTAGENESIS OF TYR-222</scope>
</reference>
<reference key="65">
    <citation type="journal article" date="2012" name="Nature">
        <title>DAXX envelops a histone H3.3-H4 dimer for H3.3-specific recognition.</title>
        <authorList>
            <person name="Elsasser S.J."/>
            <person name="Huang H."/>
            <person name="Lewis P.W."/>
            <person name="Chin J.W."/>
            <person name="Allis C.D."/>
            <person name="Patel D.J."/>
        </authorList>
    </citation>
    <scope>X-RAY CRYSTALLOGRAPHY (1.95 ANGSTROMS) OF 178-389 IN COMPLEX WITH HISTONE H3.3/H4 DIMER</scope>
    <scope>MUTAGENESIS OF GLN-206; SER-220; TYR-222; GLU-225; LYS-229; ARG-251; PHE-317; ARG-328 AND ASP-331</scope>
</reference>
<feature type="chain" id="PRO_0000151258" description="Death domain-associated protein 6">
    <location>
        <begin position="1"/>
        <end position="740"/>
    </location>
</feature>
<feature type="region of interest" description="Necessary for interaction with USP7 and ATRX">
    <location>
        <begin position="1"/>
        <end position="160"/>
    </location>
</feature>
<feature type="region of interest" description="Disordered" evidence="4">
    <location>
        <begin position="1"/>
        <end position="55"/>
    </location>
</feature>
<feature type="region of interest" description="Disordered" evidence="4">
    <location>
        <begin position="147"/>
        <end position="185"/>
    </location>
</feature>
<feature type="region of interest" description="Interaction with histone H3.3">
    <location>
        <begin position="183"/>
        <end position="417"/>
    </location>
</feature>
<feature type="region of interest" description="Necessary for interaction with USP7">
    <location>
        <begin position="347"/>
        <end position="570"/>
    </location>
</feature>
<feature type="region of interest" description="Disordered" evidence="4">
    <location>
        <begin position="384"/>
        <end position="724"/>
    </location>
</feature>
<feature type="region of interest" description="Interaction with MAP3K5">
    <location>
        <begin position="501"/>
        <end position="625"/>
    </location>
</feature>
<feature type="region of interest" description="Interaction with SPOP" evidence="23">
    <location>
        <begin position="626"/>
        <end position="740"/>
    </location>
</feature>
<feature type="region of interest" description="(Microbial infection) Interaction with Puumala hantavirus nucleoprotein" evidence="12">
    <location>
        <begin position="627"/>
        <end position="634"/>
    </location>
</feature>
<feature type="region of interest" description="(Microbial infection) Interaction with Puumala hantavirus nucleoprotein" evidence="12">
    <location>
        <begin position="658"/>
        <end position="663"/>
    </location>
</feature>
<feature type="region of interest" description="Sumo interaction motif (SIM)">
    <location>
        <begin position="733"/>
        <end position="740"/>
    </location>
</feature>
<feature type="coiled-coil region" evidence="3">
    <location>
        <begin position="180"/>
        <end position="217"/>
    </location>
</feature>
<feature type="coiled-coil region" evidence="3">
    <location>
        <begin position="358"/>
        <end position="399"/>
    </location>
</feature>
<feature type="coiled-coil region" evidence="3">
    <location>
        <begin position="430"/>
        <end position="489"/>
    </location>
</feature>
<feature type="short sequence motif" description="Nuclear localization signal" evidence="3">
    <location>
        <begin position="391"/>
        <end position="395"/>
    </location>
</feature>
<feature type="short sequence motif" description="Nuclear localization signal" evidence="3">
    <location>
        <begin position="628"/>
        <end position="634"/>
    </location>
</feature>
<feature type="compositionally biased region" description="Low complexity" evidence="4">
    <location>
        <begin position="29"/>
        <end position="55"/>
    </location>
</feature>
<feature type="compositionally biased region" description="Polar residues" evidence="4">
    <location>
        <begin position="149"/>
        <end position="181"/>
    </location>
</feature>
<feature type="compositionally biased region" description="Acidic residues" evidence="4">
    <location>
        <begin position="435"/>
        <end position="486"/>
    </location>
</feature>
<feature type="compositionally biased region" description="Polar residues" evidence="4">
    <location>
        <begin position="496"/>
        <end position="505"/>
    </location>
</feature>
<feature type="compositionally biased region" description="Polar residues" evidence="4">
    <location>
        <begin position="514"/>
        <end position="524"/>
    </location>
</feature>
<feature type="compositionally biased region" description="Low complexity" evidence="4">
    <location>
        <begin position="529"/>
        <end position="542"/>
    </location>
</feature>
<feature type="compositionally biased region" description="Acidic residues" evidence="4">
    <location>
        <begin position="551"/>
        <end position="561"/>
    </location>
</feature>
<feature type="compositionally biased region" description="Polar residues" evidence="4">
    <location>
        <begin position="578"/>
        <end position="590"/>
    </location>
</feature>
<feature type="compositionally biased region" description="Basic and acidic residues" evidence="4">
    <location>
        <begin position="650"/>
        <end position="660"/>
    </location>
</feature>
<feature type="compositionally biased region" description="Low complexity" evidence="4">
    <location>
        <begin position="673"/>
        <end position="683"/>
    </location>
</feature>
<feature type="compositionally biased region" description="Polar residues" evidence="4">
    <location>
        <begin position="693"/>
        <end position="711"/>
    </location>
</feature>
<feature type="modified residue" description="Phosphoserine" evidence="60">
    <location>
        <position position="25"/>
    </location>
</feature>
<feature type="modified residue" description="Phosphoserine" evidence="54 59">
    <location>
        <position position="178"/>
    </location>
</feature>
<feature type="modified residue" description="Phosphoserine" evidence="54">
    <location>
        <position position="213"/>
    </location>
</feature>
<feature type="modified residue" description="Phosphoserine" evidence="59">
    <location>
        <position position="412"/>
    </location>
</feature>
<feature type="modified residue" description="Phosphoserine" evidence="59">
    <location>
        <position position="424"/>
    </location>
</feature>
<feature type="modified residue" description="Phosphothreonine" evidence="1">
    <location>
        <position position="459"/>
    </location>
</feature>
<feature type="modified residue" description="Phosphoserine" evidence="54 57 58 59">
    <location>
        <position position="495"/>
    </location>
</feature>
<feature type="modified residue" description="Phosphoserine" evidence="2">
    <location>
        <position position="498"/>
    </location>
</feature>
<feature type="modified residue" description="N6-acetyllysine" evidence="55">
    <location>
        <position position="512"/>
    </location>
</feature>
<feature type="modified residue" description="Phosphoserine" evidence="2">
    <location>
        <position position="561"/>
    </location>
</feature>
<feature type="modified residue" description="Phosphoserine" evidence="2">
    <location>
        <position position="580"/>
    </location>
</feature>
<feature type="modified residue" description="Phosphoserine" evidence="18 54">
    <location>
        <position position="668"/>
    </location>
</feature>
<feature type="modified residue" description="Phosphoserine" evidence="53 54 59">
    <location>
        <position position="671"/>
    </location>
</feature>
<feature type="modified residue" description="Phosphoserine" evidence="54 59">
    <location>
        <position position="688"/>
    </location>
</feature>
<feature type="modified residue" description="Phosphoserine" evidence="52 53 54 56 57 58 59">
    <location>
        <position position="702"/>
    </location>
</feature>
<feature type="modified residue" description="Phosphoserine" evidence="54 56 57">
    <location>
        <position position="737"/>
    </location>
</feature>
<feature type="modified residue" description="Phosphoserine" evidence="54 56 57">
    <location>
        <position position="739"/>
    </location>
</feature>
<feature type="cross-link" description="Glycyl lysine isopeptide (Lys-Gly) (interchain with G-Cter in SUMO2)" evidence="61">
    <location>
        <position position="142"/>
    </location>
</feature>
<feature type="cross-link" description="Glycyl lysine isopeptide (Lys-Gly) (interchain with G-Cter in SUMO1)" evidence="15">
    <location>
        <position position="630"/>
    </location>
</feature>
<feature type="cross-link" description="Glycyl lysine isopeptide (Lys-Gly) (interchain with G-Cter in SUMO1)" evidence="15">
    <location>
        <position position="631"/>
    </location>
</feature>
<feature type="splice variant" id="VSP_045588" description="In isoform 3." evidence="47">
    <location>
        <begin position="1"/>
        <end position="75"/>
    </location>
</feature>
<feature type="splice variant" id="VSP_057437" description="In isoform gamma." evidence="49">
    <original>YVERQRSVHEKNGKKICTLPSPPSPLASLAPVADS</original>
    <variation>PAVPNPPFTASSAWYLQDKCGHTMRSRRDHRALRL</variation>
    <location>
        <begin position="648"/>
        <end position="682"/>
    </location>
</feature>
<feature type="splice variant" id="VSP_057438" description="In isoform beta." evidence="49">
    <original>RSVHEKNGKKICTLPSPPSPLASLAPVADSSTRVDS</original>
    <variation>SPAVPNPPFTASSAWYLQDKCGHTMRSRRDHRALRL</variation>
    <location>
        <begin position="653"/>
        <end position="688"/>
    </location>
</feature>
<feature type="splice variant" id="VSP_057439" description="In isoform gamma." evidence="49">
    <location>
        <begin position="683"/>
        <end position="740"/>
    </location>
</feature>
<feature type="splice variant" id="VSP_057440" description="In isoform beta." evidence="49">
    <location>
        <begin position="689"/>
        <end position="740"/>
    </location>
</feature>
<feature type="splice variant" id="VSP_001270" description="In isoform 2." evidence="48">
    <original>SSLCIPSPARLSQTPHSQPPRPGTCKTSVATQCDPEEIIVLSDSD</original>
    <variation>PAKNLGRRRSKQDQG</variation>
    <location>
        <begin position="696"/>
        <end position="740"/>
    </location>
</feature>
<feature type="mutagenesis site" description="Impairs interaction with histones H3 and H4." evidence="38">
    <original>Q</original>
    <variation>L</variation>
    <location>
        <position position="206"/>
    </location>
</feature>
<feature type="mutagenesis site" description="Abolishes interaction with histones H3 and H4." evidence="38">
    <original>S</original>
    <variation>A</variation>
    <location>
        <position position="220"/>
    </location>
</feature>
<feature type="mutagenesis site" description="Abolishes interaction with histones H3 and H4." evidence="38 39">
    <original>Y</original>
    <variation>A</variation>
    <variation>S</variation>
    <location>
        <position position="222"/>
    </location>
</feature>
<feature type="mutagenesis site" description="Abolishes interaction with histone H3.3." evidence="38 39">
    <original>Y</original>
    <variation>E</variation>
    <location>
        <position position="222"/>
    </location>
</feature>
<feature type="mutagenesis site" description="Impairs interaction with histones H3 and H4." evidence="38">
    <original>E</original>
    <variation>L</variation>
    <location>
        <position position="225"/>
    </location>
</feature>
<feature type="mutagenesis site" description="Impairs interaction with histones H3 and H4." evidence="38">
    <original>K</original>
    <variation>A</variation>
    <variation>L</variation>
    <location>
        <position position="229"/>
    </location>
</feature>
<feature type="mutagenesis site" description="Abolishes interaction with histones H3 and H4." evidence="38">
    <original>R</original>
    <variation>A</variation>
    <location>
        <position position="251"/>
    </location>
</feature>
<feature type="mutagenesis site" description="Abolishes interaction with histones H3 and H4." evidence="38">
    <original>F</original>
    <variation>A</variation>
    <location>
        <position position="317"/>
    </location>
</feature>
<feature type="mutagenesis site" description="Abolishes interaction with histones H3 and H4." evidence="38">
    <original>R</original>
    <variation>A</variation>
    <location>
        <position position="328"/>
    </location>
</feature>
<feature type="mutagenesis site" description="Abolishes interaction with histones H3 and H4." evidence="38">
    <original>D</original>
    <variation>A</variation>
    <location>
        <position position="331"/>
    </location>
</feature>
<feature type="mutagenesis site" description="Abolishes sumoylation; when associated with A-631." evidence="15">
    <original>K</original>
    <variation>A</variation>
    <location>
        <position position="630"/>
    </location>
</feature>
<feature type="mutagenesis site" description="Abolishes sumoylation; when associated with A-630." evidence="15">
    <original>K</original>
    <variation>A</variation>
    <location>
        <position position="631"/>
    </location>
</feature>
<feature type="mutagenesis site" description="No translocation to the cytosol upon glucose deprivation." evidence="18">
    <original>S</original>
    <variation>A</variation>
    <location>
        <position position="668"/>
    </location>
</feature>
<feature type="mutagenesis site" description="No effect on cytosol translocation. upon glucose deprivation." evidence="18">
    <original>S</original>
    <variation>A</variation>
    <location>
        <position position="671"/>
    </location>
</feature>
<feature type="mutagenesis site" description="Abolishes sumoylation." evidence="27">
    <location>
        <begin position="733"/>
        <end position="740"/>
    </location>
</feature>
<feature type="sequence conflict" description="In Ref. 2; AAB66585." evidence="50" ref="2">
    <original>Q</original>
    <variation>R</variation>
    <location>
        <position position="177"/>
    </location>
</feature>
<feature type="sequence conflict" description="In Ref. 5; AAC72843." evidence="50" ref="5">
    <original>R</original>
    <variation>H</variation>
    <location>
        <position position="263"/>
    </location>
</feature>
<feature type="sequence conflict" description="In Ref. 2; AAB66585." evidence="50" ref="2">
    <original>R</original>
    <variation>W</variation>
    <location>
        <position position="323"/>
    </location>
</feature>
<feature type="sequence conflict" description="In Ref. 2; AAB66585." evidence="50" ref="2">
    <original>R</original>
    <variation>Q</variation>
    <location>
        <position position="365"/>
    </location>
</feature>
<feature type="sequence conflict" description="In Ref. 2; AAB66585." evidence="50" ref="2">
    <original>L</original>
    <variation>S</variation>
    <location>
        <position position="382"/>
    </location>
</feature>
<feature type="sequence conflict" description="In Ref. 8; BAG64795." evidence="50" ref="8">
    <original>E</original>
    <variation>G</variation>
    <location>
        <position position="505"/>
    </location>
</feature>
<feature type="sequence conflict" description="In Ref. 10; CAB09986/CAB09989." evidence="50" ref="10">
    <original>S</original>
    <variation>R</variation>
    <location>
        <position position="647"/>
    </location>
</feature>
<feature type="sequence conflict" description="In Ref. 10; CAB09986/CAB09989." evidence="50" ref="10">
    <original>T</original>
    <variation>A</variation>
    <location>
        <position position="722"/>
    </location>
</feature>
<feature type="sequence conflict" description="In Ref. 5; AAC72843." evidence="50" ref="5">
    <original>EE</original>
    <variation>KK</variation>
    <location>
        <begin position="731"/>
        <end position="732"/>
    </location>
</feature>
<feature type="helix" evidence="66">
    <location>
        <begin position="60"/>
        <end position="77"/>
    </location>
</feature>
<feature type="turn" evidence="63">
    <location>
        <begin position="78"/>
        <end position="80"/>
    </location>
</feature>
<feature type="helix" evidence="66">
    <location>
        <begin position="84"/>
        <end position="93"/>
    </location>
</feature>
<feature type="helix" evidence="66">
    <location>
        <begin position="97"/>
        <end position="100"/>
    </location>
</feature>
<feature type="helix" evidence="66">
    <location>
        <begin position="103"/>
        <end position="118"/>
    </location>
</feature>
<feature type="helix" evidence="66">
    <location>
        <begin position="120"/>
        <end position="122"/>
    </location>
</feature>
<feature type="helix" evidence="66">
    <location>
        <begin position="123"/>
        <end position="136"/>
    </location>
</feature>
<feature type="strand" evidence="62">
    <location>
        <begin position="138"/>
        <end position="140"/>
    </location>
</feature>
<feature type="helix" evidence="64">
    <location>
        <begin position="185"/>
        <end position="206"/>
    </location>
</feature>
<feature type="helix" evidence="64">
    <location>
        <begin position="214"/>
        <end position="216"/>
    </location>
</feature>
<feature type="helix" evidence="64">
    <location>
        <begin position="221"/>
        <end position="242"/>
    </location>
</feature>
<feature type="helix" evidence="64">
    <location>
        <begin position="252"/>
        <end position="254"/>
    </location>
</feature>
<feature type="helix" evidence="64">
    <location>
        <begin position="265"/>
        <end position="275"/>
    </location>
</feature>
<feature type="strand" evidence="65">
    <location>
        <begin position="278"/>
        <end position="280"/>
    </location>
</feature>
<feature type="helix" evidence="64">
    <location>
        <begin position="286"/>
        <end position="299"/>
    </location>
</feature>
<feature type="helix" evidence="64">
    <location>
        <begin position="306"/>
        <end position="333"/>
    </location>
</feature>
<feature type="helix" evidence="64">
    <location>
        <begin position="339"/>
        <end position="341"/>
    </location>
</feature>
<feature type="helix" evidence="64">
    <location>
        <begin position="346"/>
        <end position="348"/>
    </location>
</feature>
<feature type="helix" evidence="64">
    <location>
        <begin position="350"/>
        <end position="353"/>
    </location>
</feature>
<feature type="helix" evidence="64">
    <location>
        <begin position="355"/>
        <end position="384"/>
    </location>
</feature>
<dbReference type="EMBL" id="AF039136">
    <property type="protein sequence ID" value="AAB92671.1"/>
    <property type="molecule type" value="mRNA"/>
</dbReference>
<dbReference type="EMBL" id="AF006041">
    <property type="protein sequence ID" value="AAB63043.1"/>
    <property type="molecule type" value="mRNA"/>
</dbReference>
<dbReference type="EMBL" id="AF015956">
    <property type="protein sequence ID" value="AAB66585.2"/>
    <property type="molecule type" value="mRNA"/>
</dbReference>
<dbReference type="EMBL" id="AF050179">
    <property type="protein sequence ID" value="AAC39853.1"/>
    <property type="molecule type" value="mRNA"/>
</dbReference>
<dbReference type="EMBL" id="AF097742">
    <property type="protein sequence ID" value="AAC72843.1"/>
    <property type="molecule type" value="mRNA"/>
</dbReference>
<dbReference type="EMBL" id="HQ436528">
    <property type="protein sequence ID" value="AEC33235.1"/>
    <property type="molecule type" value="mRNA"/>
</dbReference>
<dbReference type="EMBL" id="HQ436529">
    <property type="protein sequence ID" value="AEC33236.1"/>
    <property type="molecule type" value="mRNA"/>
</dbReference>
<dbReference type="EMBL" id="AB015051">
    <property type="protein sequence ID" value="BAA34295.1"/>
    <property type="molecule type" value="mRNA"/>
</dbReference>
<dbReference type="EMBL" id="AK303854">
    <property type="protein sequence ID" value="BAG64795.1"/>
    <property type="molecule type" value="mRNA"/>
</dbReference>
<dbReference type="EMBL" id="CR457085">
    <property type="protein sequence ID" value="CAG33366.1"/>
    <property type="molecule type" value="mRNA"/>
</dbReference>
<dbReference type="EMBL" id="AL662820">
    <property type="status" value="NOT_ANNOTATED_CDS"/>
    <property type="molecule type" value="Genomic_DNA"/>
</dbReference>
<dbReference type="EMBL" id="AL662827">
    <property type="status" value="NOT_ANNOTATED_CDS"/>
    <property type="molecule type" value="Genomic_DNA"/>
</dbReference>
<dbReference type="EMBL" id="BX248088">
    <property type="status" value="NOT_ANNOTATED_CDS"/>
    <property type="molecule type" value="Genomic_DNA"/>
</dbReference>
<dbReference type="EMBL" id="CR759793">
    <property type="status" value="NOT_ANNOTATED_CDS"/>
    <property type="molecule type" value="Genomic_DNA"/>
</dbReference>
<dbReference type="EMBL" id="CR759786">
    <property type="status" value="NOT_ANNOTATED_CDS"/>
    <property type="molecule type" value="Genomic_DNA"/>
</dbReference>
<dbReference type="EMBL" id="CR759817">
    <property type="status" value="NOT_ANNOTATED_CDS"/>
    <property type="molecule type" value="Genomic_DNA"/>
</dbReference>
<dbReference type="EMBL" id="Z97183">
    <property type="protein sequence ID" value="CAB09986.2"/>
    <property type="molecule type" value="Genomic_DNA"/>
</dbReference>
<dbReference type="EMBL" id="Z97184">
    <property type="protein sequence ID" value="CAB09986.2"/>
    <property type="status" value="JOINED"/>
    <property type="molecule type" value="Genomic_DNA"/>
</dbReference>
<dbReference type="EMBL" id="Z97184">
    <property type="protein sequence ID" value="CAB09989.2"/>
    <property type="molecule type" value="Genomic_DNA"/>
</dbReference>
<dbReference type="EMBL" id="Z97183">
    <property type="protein sequence ID" value="CAB09989.2"/>
    <property type="status" value="JOINED"/>
    <property type="molecule type" value="Genomic_DNA"/>
</dbReference>
<dbReference type="EMBL" id="CH471081">
    <property type="protein sequence ID" value="EAX03722.1"/>
    <property type="molecule type" value="Genomic_DNA"/>
</dbReference>
<dbReference type="EMBL" id="BC000220">
    <property type="protein sequence ID" value="AAH00220.1"/>
    <property type="molecule type" value="mRNA"/>
</dbReference>
<dbReference type="EMBL" id="BC109073">
    <property type="protein sequence ID" value="AAI09074.1"/>
    <property type="molecule type" value="mRNA"/>
</dbReference>
<dbReference type="EMBL" id="BC109074">
    <property type="protein sequence ID" value="AAI09075.1"/>
    <property type="molecule type" value="mRNA"/>
</dbReference>
<dbReference type="CCDS" id="CCDS4776.1">
    <molecule id="Q9UER7-1"/>
</dbReference>
<dbReference type="CCDS" id="CCDS59008.1">
    <molecule id="Q9UER7-3"/>
</dbReference>
<dbReference type="PIR" id="T03847">
    <property type="entry name" value="T03847"/>
</dbReference>
<dbReference type="RefSeq" id="NP_001135441.1">
    <molecule id="Q9UER7-1"/>
    <property type="nucleotide sequence ID" value="NM_001141969.2"/>
</dbReference>
<dbReference type="RefSeq" id="NP_001241646.1">
    <molecule id="Q9UER7-3"/>
    <property type="nucleotide sequence ID" value="NM_001254717.2"/>
</dbReference>
<dbReference type="RefSeq" id="NP_001341.1">
    <molecule id="Q9UER7-1"/>
    <property type="nucleotide sequence ID" value="NM_001350.5"/>
</dbReference>
<dbReference type="PDB" id="2KQS">
    <property type="method" value="NMR"/>
    <property type="chains" value="B=721-740"/>
</dbReference>
<dbReference type="PDB" id="2KZS">
    <property type="method" value="NMR"/>
    <property type="chains" value="A=55-144"/>
</dbReference>
<dbReference type="PDB" id="2KZU">
    <property type="method" value="NMR"/>
    <property type="chains" value="A=55-144"/>
</dbReference>
<dbReference type="PDB" id="4H9N">
    <property type="method" value="X-ray"/>
    <property type="resolution" value="1.95 A"/>
    <property type="chains" value="C=178-389"/>
</dbReference>
<dbReference type="PDB" id="4H9O">
    <property type="method" value="X-ray"/>
    <property type="resolution" value="2.05 A"/>
    <property type="chains" value="C=178-389"/>
</dbReference>
<dbReference type="PDB" id="4H9P">
    <property type="method" value="X-ray"/>
    <property type="resolution" value="2.20 A"/>
    <property type="chains" value="C=178-389"/>
</dbReference>
<dbReference type="PDB" id="4H9Q">
    <property type="method" value="X-ray"/>
    <property type="resolution" value="1.95 A"/>
    <property type="chains" value="C=178-389"/>
</dbReference>
<dbReference type="PDB" id="4H9R">
    <property type="method" value="X-ray"/>
    <property type="resolution" value="2.20 A"/>
    <property type="chains" value="C=178-389"/>
</dbReference>
<dbReference type="PDB" id="4H9S">
    <property type="method" value="X-ray"/>
    <property type="resolution" value="2.60 A"/>
    <property type="chains" value="E/F=183-398"/>
</dbReference>
<dbReference type="PDB" id="4HGA">
    <property type="method" value="X-ray"/>
    <property type="resolution" value="2.80 A"/>
    <property type="chains" value="A=184-390"/>
</dbReference>
<dbReference type="PDB" id="5GRQ">
    <property type="method" value="X-ray"/>
    <property type="resolution" value="1.58 A"/>
    <property type="chains" value="A=55-144, B=55-143"/>
</dbReference>
<dbReference type="PDB" id="5KDM">
    <property type="method" value="X-ray"/>
    <property type="resolution" value="3.50 A"/>
    <property type="chains" value="C=178-389"/>
</dbReference>
<dbReference type="PDB" id="5Y18">
    <property type="method" value="X-ray"/>
    <property type="resolution" value="2.20 A"/>
    <property type="chains" value="A=55-144"/>
</dbReference>
<dbReference type="PDB" id="5Y6O">
    <property type="method" value="X-ray"/>
    <property type="resolution" value="3.10 A"/>
    <property type="chains" value="A/B/C/D/E/F/G/H/I=50-144"/>
</dbReference>
<dbReference type="PDBsum" id="2KQS"/>
<dbReference type="PDBsum" id="2KZS"/>
<dbReference type="PDBsum" id="2KZU"/>
<dbReference type="PDBsum" id="4H9N"/>
<dbReference type="PDBsum" id="4H9O"/>
<dbReference type="PDBsum" id="4H9P"/>
<dbReference type="PDBsum" id="4H9Q"/>
<dbReference type="PDBsum" id="4H9R"/>
<dbReference type="PDBsum" id="4H9S"/>
<dbReference type="PDBsum" id="4HGA"/>
<dbReference type="PDBsum" id="5GRQ"/>
<dbReference type="PDBsum" id="5KDM"/>
<dbReference type="PDBsum" id="5Y18"/>
<dbReference type="PDBsum" id="5Y6O"/>
<dbReference type="BMRB" id="Q9UER7"/>
<dbReference type="SMR" id="Q9UER7"/>
<dbReference type="BioGRID" id="107985">
    <property type="interactions" value="368"/>
</dbReference>
<dbReference type="CORUM" id="Q9UER7"/>
<dbReference type="DIP" id="DIP-27628N"/>
<dbReference type="FunCoup" id="Q9UER7">
    <property type="interactions" value="3080"/>
</dbReference>
<dbReference type="IntAct" id="Q9UER7">
    <property type="interactions" value="260"/>
</dbReference>
<dbReference type="MINT" id="Q9UER7"/>
<dbReference type="STRING" id="9606.ENSP00000266000"/>
<dbReference type="GlyGen" id="Q9UER7">
    <property type="glycosylation" value="2 sites, 1 O-linked glycan (2 sites)"/>
</dbReference>
<dbReference type="iPTMnet" id="Q9UER7"/>
<dbReference type="PhosphoSitePlus" id="Q9UER7"/>
<dbReference type="BioMuta" id="DAXX"/>
<dbReference type="DMDM" id="24636785"/>
<dbReference type="jPOST" id="Q9UER7"/>
<dbReference type="MassIVE" id="Q9UER7"/>
<dbReference type="PaxDb" id="9606-ENSP00000363668"/>
<dbReference type="PeptideAtlas" id="Q9UER7"/>
<dbReference type="ProteomicsDB" id="25260"/>
<dbReference type="ProteomicsDB" id="84150">
    <molecule id="Q9UER7-1"/>
</dbReference>
<dbReference type="ProteomicsDB" id="84151">
    <molecule id="Q9UER7-2"/>
</dbReference>
<dbReference type="Pumba" id="Q9UER7"/>
<dbReference type="Antibodypedia" id="1411">
    <property type="antibodies" value="1038 antibodies from 46 providers"/>
</dbReference>
<dbReference type="DNASU" id="1616"/>
<dbReference type="Ensembl" id="ENST00000266000.10">
    <molecule id="Q9UER7-1"/>
    <property type="protein sequence ID" value="ENSP00000266000.6"/>
    <property type="gene ID" value="ENSG00000204209.13"/>
</dbReference>
<dbReference type="Ensembl" id="ENST00000374542.10">
    <molecule id="Q9UER7-1"/>
    <property type="protein sequence ID" value="ENSP00000363668.5"/>
    <property type="gene ID" value="ENSG00000204209.13"/>
</dbReference>
<dbReference type="Ensembl" id="ENST00000383062.8">
    <molecule id="Q9UER7-1"/>
    <property type="protein sequence ID" value="ENSP00000372539.4"/>
    <property type="gene ID" value="ENSG00000206206.11"/>
</dbReference>
<dbReference type="Ensembl" id="ENST00000383194.8">
    <molecule id="Q9UER7-1"/>
    <property type="protein sequence ID" value="ENSP00000372681.4"/>
    <property type="gene ID" value="ENSG00000206279.10"/>
</dbReference>
<dbReference type="Ensembl" id="ENST00000399060.7">
    <molecule id="Q9UER7-1"/>
    <property type="protein sequence ID" value="ENSP00000382014.3"/>
    <property type="gene ID" value="ENSG00000206206.11"/>
</dbReference>
<dbReference type="Ensembl" id="ENST00000399344.7">
    <molecule id="Q9UER7-1"/>
    <property type="protein sequence ID" value="ENSP00000382281.3"/>
    <property type="gene ID" value="ENSG00000206279.10"/>
</dbReference>
<dbReference type="Ensembl" id="ENST00000414083.6">
    <molecule id="Q9UER7-3"/>
    <property type="protein sequence ID" value="ENSP00000396876.2"/>
    <property type="gene ID" value="ENSG00000204209.13"/>
</dbReference>
<dbReference type="Ensembl" id="ENST00000433482.5">
    <molecule id="Q9UER7-1"/>
    <property type="protein sequence ID" value="ENSP00000404623.1"/>
    <property type="gene ID" value="ENSG00000231617.8"/>
</dbReference>
<dbReference type="Ensembl" id="ENST00000436311.6">
    <molecule id="Q9UER7-1"/>
    <property type="protein sequence ID" value="ENSP00000404376.2"/>
    <property type="gene ID" value="ENSG00000227046.8"/>
</dbReference>
<dbReference type="Ensembl" id="ENST00000445009.6">
    <molecule id="Q9UER7-1"/>
    <property type="protein sequence ID" value="ENSP00000394108.2"/>
    <property type="gene ID" value="ENSG00000231617.8"/>
</dbReference>
<dbReference type="Ensembl" id="ENST00000455860.6">
    <molecule id="Q9UER7-1"/>
    <property type="protein sequence ID" value="ENSP00000410772.2"/>
    <property type="gene ID" value="ENSG00000227046.8"/>
</dbReference>
<dbReference type="Ensembl" id="ENST00000612868.4">
    <molecule id="Q9UER7-3"/>
    <property type="protein sequence ID" value="ENSP00000479172.1"/>
    <property type="gene ID" value="ENSG00000227046.8"/>
</dbReference>
<dbReference type="Ensembl" id="ENST00000612888.2">
    <molecule id="Q9UER7-3"/>
    <property type="protein sequence ID" value="ENSP00000483394.1"/>
    <property type="gene ID" value="ENSG00000206206.11"/>
</dbReference>
<dbReference type="Ensembl" id="ENST00000613912.3">
    <molecule id="Q9UER7-4"/>
    <property type="protein sequence ID" value="ENSP00000477633.1"/>
    <property type="gene ID" value="ENSG00000206206.11"/>
</dbReference>
<dbReference type="Ensembl" id="ENST00000616312.1">
    <molecule id="Q9UER7-4"/>
    <property type="protein sequence ID" value="ENSP00000483517.1"/>
    <property type="gene ID" value="ENSG00000227046.8"/>
</dbReference>
<dbReference type="Ensembl" id="ENST00000617660.4">
    <molecule id="Q9UER7-3"/>
    <property type="protein sequence ID" value="ENSP00000480448.1"/>
    <property type="gene ID" value="ENSG00000206279.10"/>
</dbReference>
<dbReference type="Ensembl" id="ENST00000619421.1">
    <molecule id="Q9UER7-4"/>
    <property type="protein sequence ID" value="ENSP00000478810.1"/>
    <property type="gene ID" value="ENSG00000206279.10"/>
</dbReference>
<dbReference type="Ensembl" id="ENST00000620164.4">
    <molecule id="Q9UER7-4"/>
    <property type="protein sequence ID" value="ENSP00000482399.1"/>
    <property type="gene ID" value="ENSG00000204209.13"/>
</dbReference>
<dbReference type="Ensembl" id="ENST00000622655.1">
    <molecule id="Q9UER7-4"/>
    <property type="protein sequence ID" value="ENSP00000484830.1"/>
    <property type="gene ID" value="ENSG00000231617.8"/>
</dbReference>
<dbReference type="GeneID" id="1616"/>
<dbReference type="KEGG" id="hsa:1616"/>
<dbReference type="MANE-Select" id="ENST00000374542.10">
    <property type="protein sequence ID" value="ENSP00000363668.5"/>
    <property type="RefSeq nucleotide sequence ID" value="NM_001141969.2"/>
    <property type="RefSeq protein sequence ID" value="NP_001135441.1"/>
</dbReference>
<dbReference type="UCSC" id="uc003oec.4">
    <molecule id="Q9UER7-1"/>
    <property type="organism name" value="human"/>
</dbReference>
<dbReference type="UCSC" id="uc063nwl.1">
    <property type="organism name" value="human"/>
</dbReference>
<dbReference type="AGR" id="HGNC:2681"/>
<dbReference type="CTD" id="1616"/>
<dbReference type="DisGeNET" id="1616"/>
<dbReference type="GeneCards" id="DAXX"/>
<dbReference type="HGNC" id="HGNC:2681">
    <property type="gene designation" value="DAXX"/>
</dbReference>
<dbReference type="HPA" id="ENSG00000204209">
    <property type="expression patterns" value="Low tissue specificity"/>
</dbReference>
<dbReference type="MalaCards" id="DAXX"/>
<dbReference type="MIM" id="603186">
    <property type="type" value="gene"/>
</dbReference>
<dbReference type="neXtProt" id="NX_Q9UER7"/>
<dbReference type="OpenTargets" id="ENSG00000204209"/>
<dbReference type="PharmGKB" id="PA27148"/>
<dbReference type="VEuPathDB" id="HostDB:ENSG00000204209"/>
<dbReference type="eggNOG" id="ENOG502QRS6">
    <property type="taxonomic scope" value="Eukaryota"/>
</dbReference>
<dbReference type="GeneTree" id="ENSGT00390000009448"/>
<dbReference type="HOGENOM" id="CLU_022811_1_0_1"/>
<dbReference type="InParanoid" id="Q9UER7"/>
<dbReference type="OMA" id="NSPHNED"/>
<dbReference type="OrthoDB" id="7492809at2759"/>
<dbReference type="PAN-GO" id="Q9UER7">
    <property type="GO annotations" value="7 GO annotations based on evolutionary models"/>
</dbReference>
<dbReference type="PhylomeDB" id="Q9UER7"/>
<dbReference type="TreeFam" id="TF325803"/>
<dbReference type="PathwayCommons" id="Q9UER7"/>
<dbReference type="Reactome" id="R-HSA-3899300">
    <property type="pathway name" value="SUMOylation of transcription cofactors"/>
</dbReference>
<dbReference type="Reactome" id="R-HSA-6804757">
    <property type="pathway name" value="Regulation of TP53 Degradation"/>
</dbReference>
<dbReference type="Reactome" id="R-HSA-9609690">
    <property type="pathway name" value="HCMV Early Events"/>
</dbReference>
<dbReference type="Reactome" id="R-HSA-9670095">
    <property type="pathway name" value="Inhibition of DNA recombination at telomere"/>
</dbReference>
<dbReference type="Reactome" id="R-HSA-9670613">
    <property type="pathway name" value="Defective Inhibition of DNA Recombination at Telomere Due to DAXX Mutations"/>
</dbReference>
<dbReference type="Reactome" id="R-HSA-9670615">
    <property type="pathway name" value="Defective Inhibition of DNA Recombination at Telomere Due to ATRX Mutations"/>
</dbReference>
<dbReference type="SignaLink" id="Q9UER7"/>
<dbReference type="SIGNOR" id="Q9UER7"/>
<dbReference type="BioGRID-ORCS" id="1616">
    <property type="hits" value="124 hits in 1162 CRISPR screens"/>
</dbReference>
<dbReference type="CD-CODE" id="462A97B5">
    <property type="entry name" value="Leucocyte nuclear body"/>
</dbReference>
<dbReference type="CD-CODE" id="804901D1">
    <property type="entry name" value="Nuclear speckle"/>
</dbReference>
<dbReference type="CD-CODE" id="A1835F71">
    <property type="entry name" value="Synthetic Condensate 000128"/>
</dbReference>
<dbReference type="CD-CODE" id="B5B9A610">
    <property type="entry name" value="PML body"/>
</dbReference>
<dbReference type="CD-CODE" id="C93AFFD2">
    <property type="entry name" value="Synthetic Condensate 000131"/>
</dbReference>
<dbReference type="CD-CODE" id="DAD1D2C8">
    <property type="entry name" value="SPOP/DAXX body"/>
</dbReference>
<dbReference type="ChiTaRS" id="DAXX">
    <property type="organism name" value="human"/>
</dbReference>
<dbReference type="EvolutionaryTrace" id="Q9UER7"/>
<dbReference type="GeneWiki" id="Death-associated_protein_6"/>
<dbReference type="GenomeRNAi" id="1616"/>
<dbReference type="Pharos" id="Q9UER7">
    <property type="development level" value="Tbio"/>
</dbReference>
<dbReference type="PRO" id="PR:Q9UER7"/>
<dbReference type="Proteomes" id="UP000005640">
    <property type="component" value="Chromosome 6"/>
</dbReference>
<dbReference type="RNAct" id="Q9UER7">
    <property type="molecule type" value="protein"/>
</dbReference>
<dbReference type="Bgee" id="ENSG00000204209">
    <property type="expression patterns" value="Expressed in granulocyte and 96 other cell types or tissues"/>
</dbReference>
<dbReference type="ExpressionAtlas" id="Q9UER7">
    <property type="expression patterns" value="baseline and differential"/>
</dbReference>
<dbReference type="GO" id="GO:0000775">
    <property type="term" value="C:chromosome, centromeric region"/>
    <property type="evidence" value="ECO:0000314"/>
    <property type="project" value="CACAO"/>
</dbReference>
<dbReference type="GO" id="GO:0005829">
    <property type="term" value="C:cytosol"/>
    <property type="evidence" value="ECO:0000250"/>
    <property type="project" value="UniProtKB"/>
</dbReference>
<dbReference type="GO" id="GO:0016604">
    <property type="term" value="C:nuclear body"/>
    <property type="evidence" value="ECO:0000314"/>
    <property type="project" value="HPA"/>
</dbReference>
<dbReference type="GO" id="GO:0005730">
    <property type="term" value="C:nucleolus"/>
    <property type="evidence" value="ECO:0007669"/>
    <property type="project" value="UniProtKB-SubCell"/>
</dbReference>
<dbReference type="GO" id="GO:0005654">
    <property type="term" value="C:nucleoplasm"/>
    <property type="evidence" value="ECO:0000314"/>
    <property type="project" value="HPA"/>
</dbReference>
<dbReference type="GO" id="GO:0005634">
    <property type="term" value="C:nucleus"/>
    <property type="evidence" value="ECO:0000314"/>
    <property type="project" value="GO_Central"/>
</dbReference>
<dbReference type="GO" id="GO:0016605">
    <property type="term" value="C:PML body"/>
    <property type="evidence" value="ECO:0000314"/>
    <property type="project" value="UniProtKB"/>
</dbReference>
<dbReference type="GO" id="GO:0019899">
    <property type="term" value="F:enzyme binding"/>
    <property type="evidence" value="ECO:0000353"/>
    <property type="project" value="UniProtKB"/>
</dbReference>
<dbReference type="GO" id="GO:0031072">
    <property type="term" value="F:heat shock protein binding"/>
    <property type="evidence" value="ECO:0000304"/>
    <property type="project" value="UniProtKB"/>
</dbReference>
<dbReference type="GO" id="GO:0042393">
    <property type="term" value="F:histone binding"/>
    <property type="evidence" value="ECO:0000314"/>
    <property type="project" value="UniProtKB"/>
</dbReference>
<dbReference type="GO" id="GO:0140693">
    <property type="term" value="F:molecular condensate scaffold activity"/>
    <property type="evidence" value="ECO:0000269"/>
    <property type="project" value="DisProt"/>
</dbReference>
<dbReference type="GO" id="GO:0050681">
    <property type="term" value="F:nuclear androgen receptor binding"/>
    <property type="evidence" value="ECO:0000353"/>
    <property type="project" value="UniProtKB"/>
</dbReference>
<dbReference type="GO" id="GO:0002039">
    <property type="term" value="F:p53 binding"/>
    <property type="evidence" value="ECO:0000353"/>
    <property type="project" value="UniProtKB"/>
</dbReference>
<dbReference type="GO" id="GO:0042803">
    <property type="term" value="F:protein homodimerization activity"/>
    <property type="evidence" value="ECO:0000314"/>
    <property type="project" value="UniProtKB"/>
</dbReference>
<dbReference type="GO" id="GO:0030295">
    <property type="term" value="F:protein kinase activator activity"/>
    <property type="evidence" value="ECO:0000316"/>
    <property type="project" value="ParkinsonsUK-UCL"/>
</dbReference>
<dbReference type="GO" id="GO:0019901">
    <property type="term" value="F:protein kinase binding"/>
    <property type="evidence" value="ECO:0000353"/>
    <property type="project" value="ParkinsonsUK-UCL"/>
</dbReference>
<dbReference type="GO" id="GO:0061629">
    <property type="term" value="F:RNA polymerase II-specific DNA-binding transcription factor binding"/>
    <property type="evidence" value="ECO:0000314"/>
    <property type="project" value="UniProtKB"/>
</dbReference>
<dbReference type="GO" id="GO:0003713">
    <property type="term" value="F:transcription coactivator activity"/>
    <property type="evidence" value="ECO:0000314"/>
    <property type="project" value="UniProtKB"/>
</dbReference>
<dbReference type="GO" id="GO:0003714">
    <property type="term" value="F:transcription corepressor activity"/>
    <property type="evidence" value="ECO:0000314"/>
    <property type="project" value="UniProtKB"/>
</dbReference>
<dbReference type="GO" id="GO:0140416">
    <property type="term" value="F:transcription regulator inhibitor activity"/>
    <property type="evidence" value="ECO:0000314"/>
    <property type="project" value="UniProtKB"/>
</dbReference>
<dbReference type="GO" id="GO:0031625">
    <property type="term" value="F:ubiquitin protein ligase binding"/>
    <property type="evidence" value="ECO:0000353"/>
    <property type="project" value="UniProtKB"/>
</dbReference>
<dbReference type="GO" id="GO:0030521">
    <property type="term" value="P:androgen receptor signaling pathway"/>
    <property type="evidence" value="ECO:0000314"/>
    <property type="project" value="UniProtKB"/>
</dbReference>
<dbReference type="GO" id="GO:0071276">
    <property type="term" value="P:cellular response to cadmium ion"/>
    <property type="evidence" value="ECO:0000314"/>
    <property type="project" value="UniProtKB"/>
</dbReference>
<dbReference type="GO" id="GO:0071280">
    <property type="term" value="P:cellular response to copper ion"/>
    <property type="evidence" value="ECO:0000314"/>
    <property type="project" value="UniProtKB"/>
</dbReference>
<dbReference type="GO" id="GO:0072738">
    <property type="term" value="P:cellular response to diamide"/>
    <property type="evidence" value="ECO:0000314"/>
    <property type="project" value="UniProtKB"/>
</dbReference>
<dbReference type="GO" id="GO:0034605">
    <property type="term" value="P:cellular response to heat"/>
    <property type="evidence" value="ECO:0000314"/>
    <property type="project" value="UniProtKB"/>
</dbReference>
<dbReference type="GO" id="GO:1903936">
    <property type="term" value="P:cellular response to sodium arsenite"/>
    <property type="evidence" value="ECO:0000314"/>
    <property type="project" value="UniProtKB"/>
</dbReference>
<dbReference type="GO" id="GO:0034620">
    <property type="term" value="P:cellular response to unfolded protein"/>
    <property type="evidence" value="ECO:0000314"/>
    <property type="project" value="UniProtKB"/>
</dbReference>
<dbReference type="GO" id="GO:0006338">
    <property type="term" value="P:chromatin remodeling"/>
    <property type="evidence" value="ECO:0000314"/>
    <property type="project" value="UniProtKB"/>
</dbReference>
<dbReference type="GO" id="GO:0008625">
    <property type="term" value="P:extrinsic apoptotic signaling pathway via death domain receptors"/>
    <property type="evidence" value="ECO:0000314"/>
    <property type="project" value="UniProtKB"/>
</dbReference>
<dbReference type="GO" id="GO:0007254">
    <property type="term" value="P:JNK cascade"/>
    <property type="evidence" value="ECO:0000314"/>
    <property type="project" value="UniProtKB"/>
</dbReference>
<dbReference type="GO" id="GO:0045892">
    <property type="term" value="P:negative regulation of DNA-templated transcription"/>
    <property type="evidence" value="ECO:0000314"/>
    <property type="project" value="UniProtKB"/>
</dbReference>
<dbReference type="GO" id="GO:0010629">
    <property type="term" value="P:negative regulation of gene expression"/>
    <property type="evidence" value="ECO:0000314"/>
    <property type="project" value="UniProtKB"/>
</dbReference>
<dbReference type="GO" id="GO:0036480">
    <property type="term" value="P:neuron intrinsic apoptotic signaling pathway in response to oxidative stress"/>
    <property type="evidence" value="ECO:0000316"/>
    <property type="project" value="ParkinsonsUK-UCL"/>
</dbReference>
<dbReference type="GO" id="GO:0006334">
    <property type="term" value="P:nucleosome assembly"/>
    <property type="evidence" value="ECO:0000314"/>
    <property type="project" value="UniProtKB"/>
</dbReference>
<dbReference type="GO" id="GO:0042981">
    <property type="term" value="P:regulation of apoptotic process"/>
    <property type="evidence" value="ECO:0000318"/>
    <property type="project" value="GO_Central"/>
</dbReference>
<dbReference type="GO" id="GO:0006355">
    <property type="term" value="P:regulation of DNA-templated transcription"/>
    <property type="evidence" value="ECO:0000314"/>
    <property type="project" value="MGI"/>
</dbReference>
<dbReference type="GO" id="GO:0010468">
    <property type="term" value="P:regulation of gene expression"/>
    <property type="evidence" value="ECO:0000314"/>
    <property type="project" value="UniProtKB"/>
</dbReference>
<dbReference type="GO" id="GO:0031396">
    <property type="term" value="P:regulation of protein ubiquitination"/>
    <property type="evidence" value="ECO:0000314"/>
    <property type="project" value="UniProtKB"/>
</dbReference>
<dbReference type="CDD" id="cd13151">
    <property type="entry name" value="DAXX_helical_bundle"/>
    <property type="match status" value="1"/>
</dbReference>
<dbReference type="CDD" id="cd13150">
    <property type="entry name" value="DAXX_histone_binding"/>
    <property type="match status" value="1"/>
</dbReference>
<dbReference type="DisProt" id="DP00707"/>
<dbReference type="FunFam" id="1.10.8.810:FF:000001">
    <property type="entry name" value="Death domain-associated protein 6"/>
    <property type="match status" value="1"/>
</dbReference>
<dbReference type="FunFam" id="1.20.58.2170:FF:000001">
    <property type="entry name" value="Death domain-associated protein 6"/>
    <property type="match status" value="1"/>
</dbReference>
<dbReference type="Gene3D" id="1.20.58.2170">
    <property type="match status" value="1"/>
</dbReference>
<dbReference type="Gene3D" id="1.10.8.810">
    <property type="entry name" value="Daxx helical bundle domain"/>
    <property type="match status" value="1"/>
</dbReference>
<dbReference type="IDEAL" id="IID00398"/>
<dbReference type="InterPro" id="IPR046378">
    <property type="entry name" value="DAXX_histone-bd"/>
</dbReference>
<dbReference type="InterPro" id="IPR046426">
    <property type="entry name" value="DAXX_histone-bd_sf"/>
</dbReference>
<dbReference type="InterPro" id="IPR031333">
    <property type="entry name" value="Daxx_N"/>
</dbReference>
<dbReference type="InterPro" id="IPR038298">
    <property type="entry name" value="Daxx_N_sf"/>
</dbReference>
<dbReference type="PANTHER" id="PTHR12766:SF7">
    <property type="entry name" value="DEATH DOMAIN-ASSOCIATED PROTEIN 6"/>
    <property type="match status" value="1"/>
</dbReference>
<dbReference type="PANTHER" id="PTHR12766">
    <property type="entry name" value="DEATH DOMAIN-ASSOCIATED PROTEIN 6 DAXX"/>
    <property type="match status" value="1"/>
</dbReference>
<dbReference type="Pfam" id="PF03344">
    <property type="entry name" value="Daxx"/>
    <property type="match status" value="1"/>
</dbReference>
<dbReference type="Pfam" id="PF20920">
    <property type="entry name" value="DAXX_hist_bd"/>
    <property type="match status" value="1"/>
</dbReference>
<sequence length="740" mass="81373">MATANSIIVLDDDDEDEAAAQPGPSHPLPNAASPGAEAPSSSEPHGARGSSSSGGKKCYKLENEKLFEEFLELCKMQTADHPEVVPFLYNRQQRAHSLFLASAEFCNILSRVLSRARSRPAKLYVYINELCTVLKAHSAKKKLNLAPAATTSNEPSGNNPPTHLSLDPTNAENTASQSPRTRGSRRQIQRLEQLLALYVAEIRRLQEKELDLSELDDPDSAYLQEARLKRKLIRLFGRLCELKDCSSLTGRVIEQRIPYRGTRYPEVNRRIERLINKPGPDTFPDYGDVLRAVEKAAARHSLGLPRQQLQLMAQDAFRDVGIRLQERRHLDLIYNFGCHLTDDYRPGVDPALSDPVLARRLRENRSLAMSRLDEVISKYAMLQDKSEEGERKKRRARLQGTSSHSADTPEASLDSGEGPSGMASQGCPSASRAETDDEDDEESDEEEEEEEEEEEEEATDSEEEEDLEQMQEGQEDDEEEDEEEEAAAGKDGDKSPMSSLQISNEKNLEPGKQISRSSGEQQNKGRIVSPSLLSEEPLAPSSIDAESNGEQPEELTLEEESPVSQLFELEIEALPLDTPSSVETDISSSRKQSEEPFTTVLENGAGMVSSTSFNGGVSPHNWGDSGPPCKKSRKEKKQTGSGPLGNSYVERQRSVHEKNGKKICTLPSPPSPLASLAPVADSSTRVDSPSHGLVTSSLCIPSPARLSQTPHSQPPRPGTCKTSVATQCDPEEIIVLSDSD</sequence>
<name>DAXX_HUMAN</name>